<accession>Q96GM5</accession>
<accession>A6NN27</accession>
<accession>Q92924</accession>
<accession>Q9Y635</accession>
<feature type="chain" id="PRO_0000071983" description="SWI/SNF-related matrix-associated actin-dependent regulator of chromatin subfamily D member 1">
    <location>
        <begin position="1"/>
        <end position="515"/>
    </location>
</feature>
<feature type="domain" description="SWIB/MDM2" evidence="4">
    <location>
        <begin position="290"/>
        <end position="367"/>
    </location>
</feature>
<feature type="region of interest" description="Disordered" evidence="5">
    <location>
        <begin position="1"/>
        <end position="103"/>
    </location>
</feature>
<feature type="region of interest" description="Interaction with ESR1, NR1H4, NR3C1, PGR and SMARCA4" evidence="6">
    <location>
        <begin position="43"/>
        <end position="167"/>
    </location>
</feature>
<feature type="region of interest" description="Interaction with SMARCC1 and SMARCC2" evidence="6">
    <location>
        <begin position="168"/>
        <end position="474"/>
    </location>
</feature>
<feature type="region of interest" description="Necessary for GR/NR3C1-mediated remodeling and transcription from chromatin; required for GR/NR3C1 interaction with the BRG1/SMARCA4 complex in vivo">
    <location>
        <begin position="180"/>
        <end position="515"/>
    </location>
</feature>
<feature type="coiled-coil region" evidence="3">
    <location>
        <begin position="412"/>
        <end position="440"/>
    </location>
</feature>
<feature type="compositionally biased region" description="Gly residues" evidence="5">
    <location>
        <begin position="14"/>
        <end position="23"/>
    </location>
</feature>
<feature type="modified residue" description="Asymmetric dimethylarginine" evidence="2">
    <location>
        <position position="68"/>
    </location>
</feature>
<feature type="modified residue" description="Asymmetric dimethylarginine" evidence="1">
    <location>
        <position position="88"/>
    </location>
</feature>
<feature type="modified residue" description="Phosphothreonine" evidence="2">
    <location>
        <position position="203"/>
    </location>
</feature>
<feature type="modified residue" description="N6-acetyllysine" evidence="1">
    <location>
        <position position="223"/>
    </location>
</feature>
<feature type="cross-link" description="Glycyl lysine isopeptide (Lys-Gly) (interchain with G-Cter in SUMO2)" evidence="21">
    <location>
        <position position="101"/>
    </location>
</feature>
<feature type="splice variant" id="VSP_004179" description="In isoform 2." evidence="17">
    <location>
        <begin position="423"/>
        <end position="463"/>
    </location>
</feature>
<feature type="sequence variant" id="VAR_083801" description="In CSS11; uncertain significance; does not affect the interaction with SMARCC1 and SMARCA4; dbSNP:rs1592289150." evidence="11">
    <original>D</original>
    <variation>E</variation>
    <location>
        <position position="330"/>
    </location>
</feature>
<feature type="sequence variant" id="VAR_083802" description="In CSS11; dbSNP:rs1592294569." evidence="11">
    <original>R</original>
    <variation>G</variation>
    <location>
        <position position="446"/>
    </location>
</feature>
<feature type="sequence variant" id="VAR_083803" description="In CSS11; does not affect the interaction with SMARCC1 and SMARCA4." evidence="11">
    <location>
        <begin position="486"/>
        <end position="515"/>
    </location>
</feature>
<feature type="sequence variant" id="VAR_083804" description="In CSS11; does not affect the interaction with SMARCC1 and SMARCA4; dbSNP:rs1592295914." evidence="11">
    <original>F</original>
    <variation>L</variation>
    <location>
        <position position="495"/>
    </location>
</feature>
<feature type="sequence variant" id="VAR_083805" description="In CSS11." evidence="11">
    <location>
        <begin position="503"/>
        <end position="515"/>
    </location>
</feature>
<feature type="sequence conflict" description="In Ref. 1; AAC50695." evidence="18" ref="1">
    <original>S</original>
    <variation>T</variation>
    <location>
        <position position="349"/>
    </location>
</feature>
<feature type="helix" evidence="22">
    <location>
        <begin position="129"/>
        <end position="131"/>
    </location>
</feature>
<feature type="helix" evidence="22">
    <location>
        <begin position="135"/>
        <end position="140"/>
    </location>
</feature>
<feature type="helix" evidence="22">
    <location>
        <begin position="144"/>
        <end position="172"/>
    </location>
</feature>
<feature type="strand" evidence="22">
    <location>
        <begin position="294"/>
        <end position="297"/>
    </location>
</feature>
<feature type="helix" evidence="22">
    <location>
        <begin position="299"/>
        <end position="305"/>
    </location>
</feature>
<feature type="strand" evidence="22">
    <location>
        <begin position="308"/>
        <end position="311"/>
    </location>
</feature>
<feature type="helix" evidence="22">
    <location>
        <begin position="312"/>
        <end position="326"/>
    </location>
</feature>
<feature type="strand" evidence="22">
    <location>
        <begin position="331"/>
        <end position="333"/>
    </location>
</feature>
<feature type="strand" evidence="23">
    <location>
        <begin position="336"/>
        <end position="338"/>
    </location>
</feature>
<feature type="turn" evidence="22">
    <location>
        <begin position="341"/>
        <end position="346"/>
    </location>
</feature>
<feature type="strand" evidence="23">
    <location>
        <begin position="350"/>
        <end position="353"/>
    </location>
</feature>
<feature type="helix" evidence="22">
    <location>
        <begin position="354"/>
        <end position="356"/>
    </location>
</feature>
<feature type="helix" evidence="22">
    <location>
        <begin position="357"/>
        <end position="360"/>
    </location>
</feature>
<feature type="helix" evidence="22">
    <location>
        <begin position="362"/>
        <end position="364"/>
    </location>
</feature>
<feature type="helix" evidence="22">
    <location>
        <begin position="401"/>
        <end position="410"/>
    </location>
</feature>
<feature type="helix" evidence="22">
    <location>
        <begin position="415"/>
        <end position="446"/>
    </location>
</feature>
<feature type="helix" evidence="22">
    <location>
        <begin position="448"/>
        <end position="467"/>
    </location>
</feature>
<feature type="turn" evidence="22">
    <location>
        <begin position="473"/>
        <end position="477"/>
    </location>
</feature>
<feature type="helix" evidence="22">
    <location>
        <begin position="479"/>
        <end position="483"/>
    </location>
</feature>
<feature type="helix" evidence="22">
    <location>
        <begin position="487"/>
        <end position="504"/>
    </location>
</feature>
<evidence type="ECO:0000250" key="1">
    <source>
        <dbReference type="UniProtKB" id="Q61466"/>
    </source>
</evidence>
<evidence type="ECO:0000250" key="2">
    <source>
        <dbReference type="UniProtKB" id="Q92925"/>
    </source>
</evidence>
<evidence type="ECO:0000255" key="3"/>
<evidence type="ECO:0000255" key="4">
    <source>
        <dbReference type="PROSITE-ProRule" id="PRU01273"/>
    </source>
</evidence>
<evidence type="ECO:0000256" key="5">
    <source>
        <dbReference type="SAM" id="MobiDB-lite"/>
    </source>
</evidence>
<evidence type="ECO:0000269" key="6">
    <source>
    </source>
</evidence>
<evidence type="ECO:0000269" key="7">
    <source>
    </source>
</evidence>
<evidence type="ECO:0000269" key="8">
    <source>
    </source>
</evidence>
<evidence type="ECO:0000269" key="9">
    <source>
    </source>
</evidence>
<evidence type="ECO:0000269" key="10">
    <source>
    </source>
</evidence>
<evidence type="ECO:0000269" key="11">
    <source>
    </source>
</evidence>
<evidence type="ECO:0000269" key="12">
    <source>
    </source>
</evidence>
<evidence type="ECO:0000269" key="13">
    <source>
    </source>
</evidence>
<evidence type="ECO:0000269" key="14">
    <source>
    </source>
</evidence>
<evidence type="ECO:0000303" key="15">
    <source>
    </source>
</evidence>
<evidence type="ECO:0000303" key="16">
    <source>
    </source>
</evidence>
<evidence type="ECO:0000303" key="17">
    <source>
    </source>
</evidence>
<evidence type="ECO:0000305" key="18"/>
<evidence type="ECO:0000312" key="19">
    <source>
        <dbReference type="EMBL" id="AAD23390.1"/>
    </source>
</evidence>
<evidence type="ECO:0000312" key="20">
    <source>
        <dbReference type="EMBL" id="AAH09368.3"/>
    </source>
</evidence>
<evidence type="ECO:0007744" key="21">
    <source>
    </source>
</evidence>
<evidence type="ECO:0007829" key="22">
    <source>
        <dbReference type="PDB" id="6LTH"/>
    </source>
</evidence>
<evidence type="ECO:0007829" key="23">
    <source>
        <dbReference type="PDB" id="7VDV"/>
    </source>
</evidence>
<keyword id="KW-0002">3D-structure</keyword>
<keyword id="KW-0007">Acetylation</keyword>
<keyword id="KW-0025">Alternative splicing</keyword>
<keyword id="KW-0156">Chromatin regulator</keyword>
<keyword id="KW-0175">Coiled coil</keyword>
<keyword id="KW-0225">Disease variant</keyword>
<keyword id="KW-0991">Intellectual disability</keyword>
<keyword id="KW-1017">Isopeptide bond</keyword>
<keyword id="KW-0488">Methylation</keyword>
<keyword id="KW-0524">Neurogenesis</keyword>
<keyword id="KW-0539">Nucleus</keyword>
<keyword id="KW-0597">Phosphoprotein</keyword>
<keyword id="KW-1267">Proteomics identification</keyword>
<keyword id="KW-1185">Reference proteome</keyword>
<keyword id="KW-0832">Ubl conjugation</keyword>
<sequence length="515" mass="58233">MAARAGFQSVAPSGGAGASGGAGAAAALGPGGTPGPPVRMGPAPGQGLYRSPMPGAAYPRPGMLPGSRMTPQGPSMGPPGYGGNPSVRPGLAQSGMDQSRKRPAPQQIQQVQQQAVQNRNHNAKKKKMADKILPQRIRELVPESQAYMDLLAFERKLDQTIMRKRLDIQEALKRPIKQKRKLRIFISNTFNPAKSDAEDGEGTVASWELRVEGRLLEDSALSKYDATKQKRKFSSFFKSLVIELDKDLYGPDNHLVEWHRTATTQETDGFQVKRPGDVNVRCTVLLMLDYQPPQFKLDPRLARLLGIHTQTRPVIIQALWQYIKTHKLQDPHEREFVICDKYLQQIFESQRMKFSEIPQRLHALLMPPEPIIINHVISVDPNDQKKTACYDIDVEVDDTLKTQMNSFLLSTASQQEIATLDNKIHETIETINQLKTQREFMLSFARDPQGFINDWLQSQCRDLKTMTDVVGNPEEERRAEFYFQPWAQEAVCRYFYSKVQQRRQELEQALGIRNT</sequence>
<organism>
    <name type="scientific">Homo sapiens</name>
    <name type="common">Human</name>
    <dbReference type="NCBI Taxonomy" id="9606"/>
    <lineage>
        <taxon>Eukaryota</taxon>
        <taxon>Metazoa</taxon>
        <taxon>Chordata</taxon>
        <taxon>Craniata</taxon>
        <taxon>Vertebrata</taxon>
        <taxon>Euteleostomi</taxon>
        <taxon>Mammalia</taxon>
        <taxon>Eutheria</taxon>
        <taxon>Euarchontoglires</taxon>
        <taxon>Primates</taxon>
        <taxon>Haplorrhini</taxon>
        <taxon>Catarrhini</taxon>
        <taxon>Hominidae</taxon>
        <taxon>Homo</taxon>
    </lineage>
</organism>
<reference evidence="18 19" key="1">
    <citation type="journal article" date="1996" name="Genes Dev.">
        <title>Diversity and specialization of mammalian SWI/SNF complexes.</title>
        <authorList>
            <person name="Wang W."/>
            <person name="Xue Y."/>
            <person name="Zhou S."/>
            <person name="Kuo A."/>
            <person name="Cairns B.R."/>
            <person name="Crabtree G.R."/>
        </authorList>
    </citation>
    <scope>NUCLEOTIDE SEQUENCE [MRNA] (ISOFORMS 1 AND 2)</scope>
    <scope>FUNCTION</scope>
    <scope>SUBCELLULAR LOCATION</scope>
    <scope>TISSUE SPECIFICITY</scope>
    <source>
        <tissue>Peripheral blood</tissue>
    </source>
</reference>
<reference key="2">
    <citation type="journal article" date="2006" name="Nature">
        <title>The finished DNA sequence of human chromosome 12.</title>
        <authorList>
            <person name="Scherer S.E."/>
            <person name="Muzny D.M."/>
            <person name="Buhay C.J."/>
            <person name="Chen R."/>
            <person name="Cree A."/>
            <person name="Ding Y."/>
            <person name="Dugan-Rocha S."/>
            <person name="Gill R."/>
            <person name="Gunaratne P."/>
            <person name="Harris R.A."/>
            <person name="Hawes A.C."/>
            <person name="Hernandez J."/>
            <person name="Hodgson A.V."/>
            <person name="Hume J."/>
            <person name="Jackson A."/>
            <person name="Khan Z.M."/>
            <person name="Kovar-Smith C."/>
            <person name="Lewis L.R."/>
            <person name="Lozado R.J."/>
            <person name="Metzker M.L."/>
            <person name="Milosavljevic A."/>
            <person name="Miner G.R."/>
            <person name="Montgomery K.T."/>
            <person name="Morgan M.B."/>
            <person name="Nazareth L.V."/>
            <person name="Scott G."/>
            <person name="Sodergren E."/>
            <person name="Song X.-Z."/>
            <person name="Steffen D."/>
            <person name="Lovering R.C."/>
            <person name="Wheeler D.A."/>
            <person name="Worley K.C."/>
            <person name="Yuan Y."/>
            <person name="Zhang Z."/>
            <person name="Adams C.Q."/>
            <person name="Ansari-Lari M.A."/>
            <person name="Ayele M."/>
            <person name="Brown M.J."/>
            <person name="Chen G."/>
            <person name="Chen Z."/>
            <person name="Clerc-Blankenburg K.P."/>
            <person name="Davis C."/>
            <person name="Delgado O."/>
            <person name="Dinh H.H."/>
            <person name="Draper H."/>
            <person name="Gonzalez-Garay M.L."/>
            <person name="Havlak P."/>
            <person name="Jackson L.R."/>
            <person name="Jacob L.S."/>
            <person name="Kelly S.H."/>
            <person name="Li L."/>
            <person name="Li Z."/>
            <person name="Liu J."/>
            <person name="Liu W."/>
            <person name="Lu J."/>
            <person name="Maheshwari M."/>
            <person name="Nguyen B.-V."/>
            <person name="Okwuonu G.O."/>
            <person name="Pasternak S."/>
            <person name="Perez L.M."/>
            <person name="Plopper F.J.H."/>
            <person name="Santibanez J."/>
            <person name="Shen H."/>
            <person name="Tabor P.E."/>
            <person name="Verduzco D."/>
            <person name="Waldron L."/>
            <person name="Wang Q."/>
            <person name="Williams G.A."/>
            <person name="Zhang J."/>
            <person name="Zhou J."/>
            <person name="Allen C.C."/>
            <person name="Amin A.G."/>
            <person name="Anyalebechi V."/>
            <person name="Bailey M."/>
            <person name="Barbaria J.A."/>
            <person name="Bimage K.E."/>
            <person name="Bryant N.P."/>
            <person name="Burch P.E."/>
            <person name="Burkett C.E."/>
            <person name="Burrell K.L."/>
            <person name="Calderon E."/>
            <person name="Cardenas V."/>
            <person name="Carter K."/>
            <person name="Casias K."/>
            <person name="Cavazos I."/>
            <person name="Cavazos S.R."/>
            <person name="Ceasar H."/>
            <person name="Chacko J."/>
            <person name="Chan S.N."/>
            <person name="Chavez D."/>
            <person name="Christopoulos C."/>
            <person name="Chu J."/>
            <person name="Cockrell R."/>
            <person name="Cox C.D."/>
            <person name="Dang M."/>
            <person name="Dathorne S.R."/>
            <person name="David R."/>
            <person name="Davis C.M."/>
            <person name="Davy-Carroll L."/>
            <person name="Deshazo D.R."/>
            <person name="Donlin J.E."/>
            <person name="D'Souza L."/>
            <person name="Eaves K.A."/>
            <person name="Egan A."/>
            <person name="Emery-Cohen A.J."/>
            <person name="Escotto M."/>
            <person name="Flagg N."/>
            <person name="Forbes L.D."/>
            <person name="Gabisi A.M."/>
            <person name="Garza M."/>
            <person name="Hamilton C."/>
            <person name="Henderson N."/>
            <person name="Hernandez O."/>
            <person name="Hines S."/>
            <person name="Hogues M.E."/>
            <person name="Huang M."/>
            <person name="Idlebird D.G."/>
            <person name="Johnson R."/>
            <person name="Jolivet A."/>
            <person name="Jones S."/>
            <person name="Kagan R."/>
            <person name="King L.M."/>
            <person name="Leal B."/>
            <person name="Lebow H."/>
            <person name="Lee S."/>
            <person name="LeVan J.M."/>
            <person name="Lewis L.C."/>
            <person name="London P."/>
            <person name="Lorensuhewa L.M."/>
            <person name="Loulseged H."/>
            <person name="Lovett D.A."/>
            <person name="Lucier A."/>
            <person name="Lucier R.L."/>
            <person name="Ma J."/>
            <person name="Madu R.C."/>
            <person name="Mapua P."/>
            <person name="Martindale A.D."/>
            <person name="Martinez E."/>
            <person name="Massey E."/>
            <person name="Mawhiney S."/>
            <person name="Meador M.G."/>
            <person name="Mendez S."/>
            <person name="Mercado C."/>
            <person name="Mercado I.C."/>
            <person name="Merritt C.E."/>
            <person name="Miner Z.L."/>
            <person name="Minja E."/>
            <person name="Mitchell T."/>
            <person name="Mohabbat F."/>
            <person name="Mohabbat K."/>
            <person name="Montgomery B."/>
            <person name="Moore N."/>
            <person name="Morris S."/>
            <person name="Munidasa M."/>
            <person name="Ngo R.N."/>
            <person name="Nguyen N.B."/>
            <person name="Nickerson E."/>
            <person name="Nwaokelemeh O.O."/>
            <person name="Nwokenkwo S."/>
            <person name="Obregon M."/>
            <person name="Oguh M."/>
            <person name="Oragunye N."/>
            <person name="Oviedo R.J."/>
            <person name="Parish B.J."/>
            <person name="Parker D.N."/>
            <person name="Parrish J."/>
            <person name="Parks K.L."/>
            <person name="Paul H.A."/>
            <person name="Payton B.A."/>
            <person name="Perez A."/>
            <person name="Perrin W."/>
            <person name="Pickens A."/>
            <person name="Primus E.L."/>
            <person name="Pu L.-L."/>
            <person name="Puazo M."/>
            <person name="Quiles M.M."/>
            <person name="Quiroz J.B."/>
            <person name="Rabata D."/>
            <person name="Reeves K."/>
            <person name="Ruiz S.J."/>
            <person name="Shao H."/>
            <person name="Sisson I."/>
            <person name="Sonaike T."/>
            <person name="Sorelle R.P."/>
            <person name="Sutton A.E."/>
            <person name="Svatek A.F."/>
            <person name="Svetz L.A."/>
            <person name="Tamerisa K.S."/>
            <person name="Taylor T.R."/>
            <person name="Teague B."/>
            <person name="Thomas N."/>
            <person name="Thorn R.D."/>
            <person name="Trejos Z.Y."/>
            <person name="Trevino B.K."/>
            <person name="Ukegbu O.N."/>
            <person name="Urban J.B."/>
            <person name="Vasquez L.I."/>
            <person name="Vera V.A."/>
            <person name="Villasana D.M."/>
            <person name="Wang L."/>
            <person name="Ward-Moore S."/>
            <person name="Warren J.T."/>
            <person name="Wei X."/>
            <person name="White F."/>
            <person name="Williamson A.L."/>
            <person name="Wleczyk R."/>
            <person name="Wooden H.S."/>
            <person name="Wooden S.H."/>
            <person name="Yen J."/>
            <person name="Yoon L."/>
            <person name="Yoon V."/>
            <person name="Zorrilla S.E."/>
            <person name="Nelson D."/>
            <person name="Kucherlapati R."/>
            <person name="Weinstock G."/>
            <person name="Gibbs R.A."/>
        </authorList>
    </citation>
    <scope>NUCLEOTIDE SEQUENCE [LARGE SCALE GENOMIC DNA]</scope>
</reference>
<reference evidence="18 20" key="3">
    <citation type="journal article" date="2004" name="Genome Res.">
        <title>The status, quality, and expansion of the NIH full-length cDNA project: the Mammalian Gene Collection (MGC).</title>
        <authorList>
            <consortium name="The MGC Project Team"/>
        </authorList>
    </citation>
    <scope>NUCLEOTIDE SEQUENCE [LARGE SCALE MRNA] (ISOFORM 1)</scope>
    <source>
        <tissue>Muscle</tissue>
    </source>
</reference>
<reference evidence="18" key="4">
    <citation type="journal article" date="1996" name="EMBO J.">
        <title>Purification and biochemical heterogeneity of the mammalian SWI-SNF complex.</title>
        <authorList>
            <person name="Wang W."/>
            <person name="Cote J."/>
            <person name="Xue Y."/>
            <person name="Zhou S."/>
            <person name="Khavari P.A."/>
            <person name="Biggar S.R."/>
            <person name="Muchardt C."/>
            <person name="Kalpana G.V."/>
            <person name="Goff S.P."/>
            <person name="Yaniv M."/>
            <person name="Workman J.L."/>
            <person name="Crabtree G.R."/>
        </authorList>
    </citation>
    <scope>SUBUNIT</scope>
</reference>
<reference evidence="18" key="5">
    <citation type="journal article" date="2003" name="J. Steroid Biochem. Mol. Biol.">
        <title>Use of a modified yeast one-hybrid screen to identify BAF60a interactions with the Vitamin D receptor heterodimer.</title>
        <authorList>
            <person name="Koszewski N.J."/>
            <person name="Henry K.W."/>
            <person name="Lubert E.J."/>
            <person name="Gravatte H."/>
            <person name="Noonan D.J."/>
        </authorList>
    </citation>
    <scope>FUNCTION</scope>
    <scope>INTERACTION WITH THE VITAMIN D RECEPTOR HETERODIMER COMPLEX</scope>
</reference>
<reference evidence="18" key="6">
    <citation type="journal article" date="2003" name="Mol. Cell. Biol.">
        <title>BAF60a mediates critical interactions between nuclear receptors and the BRG1 chromatin-remodeling complex for transactivation.</title>
        <authorList>
            <person name="Hsiao P.W."/>
            <person name="Fryer C.J."/>
            <person name="Trotter K.W."/>
            <person name="Wang W."/>
            <person name="Archer T.K."/>
        </authorList>
    </citation>
    <scope>FUNCTION</scope>
    <scope>INTERACTION WITH ESR1; NR3C1; NR1H4; PGR; SMARCA4; SMARCC1 AND SMARCC2</scope>
</reference>
<reference key="7">
    <citation type="journal article" date="2008" name="Genes Dev.">
        <title>Regulation of muscle development by DPF3, a novel histone acetylation and methylation reader of the BAF chromatin remodeling complex.</title>
        <authorList>
            <person name="Lange M."/>
            <person name="Kaynak B."/>
            <person name="Forster U.B."/>
            <person name="Toenjes M."/>
            <person name="Fischer J.J."/>
            <person name="Grimm C."/>
            <person name="Schlesinger J."/>
            <person name="Just S."/>
            <person name="Dunkel I."/>
            <person name="Krueger T."/>
            <person name="Mebus S."/>
            <person name="Lehrach H."/>
            <person name="Lurz R."/>
            <person name="Gobom J."/>
            <person name="Rottbauer W."/>
            <person name="Abdelilah-Seyfried S."/>
            <person name="Sperling S."/>
        </authorList>
    </citation>
    <scope>IDENTIFICATION IN THE BAF COMPLEX</scope>
    <scope>IDENTIFICATION BY MASS SPECTROMETRY</scope>
</reference>
<reference key="8">
    <citation type="journal article" date="2010" name="J. Biol. Chem.">
        <title>Requiem protein links RelB/p52 and the Brm-type SWI/SNF complex in a noncanonical NF-kappaB pathway.</title>
        <authorList>
            <person name="Tando T."/>
            <person name="Ishizaka A."/>
            <person name="Watanabe H."/>
            <person name="Ito T."/>
            <person name="Iida S."/>
            <person name="Haraguchi T."/>
            <person name="Mizutani T."/>
            <person name="Izumi T."/>
            <person name="Isobe T."/>
            <person name="Akiyama T."/>
            <person name="Inoue J."/>
            <person name="Iba H."/>
        </authorList>
    </citation>
    <scope>INTERACTION WITH DEPF2</scope>
</reference>
<reference key="9">
    <citation type="journal article" date="2017" name="Nat. Struct. Mol. Biol.">
        <title>Site-specific mapping of the human SUMO proteome reveals co-modification with phosphorylation.</title>
        <authorList>
            <person name="Hendriks I.A."/>
            <person name="Lyon D."/>
            <person name="Young C."/>
            <person name="Jensen L.J."/>
            <person name="Vertegaal A.C."/>
            <person name="Nielsen M.L."/>
        </authorList>
    </citation>
    <scope>SUMOYLATION [LARGE SCALE ANALYSIS] AT LYS-101</scope>
    <scope>IDENTIFICATION BY MASS SPECTROMETRY [LARGE SCALE ANALYSIS]</scope>
</reference>
<reference key="10">
    <citation type="journal article" date="2012" name="J. Biol. Chem.">
        <title>SWI/SNF chromatin-remodeling factors: multiscale analyses and diverse functions.</title>
        <authorList>
            <person name="Euskirchen G."/>
            <person name="Auerbach R.K."/>
            <person name="Snyder M."/>
        </authorList>
    </citation>
    <scope>REVIEW ON SWI/SNF CHROMATIN REMODELING COMPLEXES</scope>
</reference>
<reference key="11">
    <citation type="journal article" date="2015" name="Sci. Adv.">
        <title>Mammalian SWI/SNF chromatin remodeling complexes and cancer: Mechanistic insights gained from human genomics.</title>
        <authorList>
            <person name="Kadoch C."/>
            <person name="Crabtree G.R."/>
        </authorList>
    </citation>
    <scope>REVIEW ON SWI/SNF CHROMATIN REMODELING COMPLEXES</scope>
</reference>
<reference key="12">
    <citation type="journal article" date="2018" name="J. Biol. Chem.">
        <title>Glioma tumor suppressor candidate region gene 1 (GLTSCR1) and its paralog GLTSCR1-like form SWI/SNF chromatin remodeling subcomplexes.</title>
        <authorList>
            <person name="Alpsoy A."/>
            <person name="Dykhuizen E.C."/>
        </authorList>
    </citation>
    <scope>FUNCTION</scope>
    <scope>IDENTIFICATION IN THE GBAF COMPLEX</scope>
</reference>
<reference key="13">
    <citation type="journal article" date="2020" name="Nucleic Acids Res.">
        <title>HRP2-DPF3a-BAF complex coordinates histone modification and chromatin remodeling to regulate myogenic gene transcription.</title>
        <authorList>
            <person name="Zhu X."/>
            <person name="Lan B."/>
            <person name="Yi X."/>
            <person name="He C."/>
            <person name="Dang L."/>
            <person name="Zhou X."/>
            <person name="Lu Y."/>
            <person name="Sun Y."/>
            <person name="Liu Z."/>
            <person name="Bai X."/>
            <person name="Zhang K."/>
            <person name="Li B."/>
            <person name="Li M.J."/>
            <person name="Chen Y."/>
            <person name="Zhang L."/>
        </authorList>
    </citation>
    <scope>INTERACTION WITH HDGFL2 AND DPF3</scope>
</reference>
<reference key="14">
    <citation type="journal article" date="2019" name="Am. J. Hum. Genet.">
        <title>A syndromic neurodevelopmental disorder caused by mutations in SMARCD1, a core SWI/SNF subunit needed for context-dependent neuronal gene regulation in flies.</title>
        <authorList>
            <consortium name="DDD Study"/>
            <person name="Nixon K.C.J."/>
            <person name="Rousseau J."/>
            <person name="Stone M.H."/>
            <person name="Sarikahya M."/>
            <person name="Ehresmann S."/>
            <person name="Mizuno S."/>
            <person name="Matsumoto N."/>
            <person name="Miyake N."/>
            <person name="Baralle D."/>
            <person name="McKee S."/>
            <person name="Izumi K."/>
            <person name="Ritter A.L."/>
            <person name="Heide S."/>
            <person name="Heron D."/>
            <person name="Depienne C."/>
            <person name="Titheradge H."/>
            <person name="Kramer J.M."/>
            <person name="Campeau P.M."/>
        </authorList>
    </citation>
    <scope>VARIANTS CSS11 GLU-330; GLY-446; 486-TRP--THR-515 DEL; LEU-495 AND 503-ARG--THR-515 DEL</scope>
    <scope>CHARACTERIZATION OF VARIANTS CSS11 GLU-330; 486-TRP--THR-515 DEL AND LEU-495</scope>
    <scope>INVOLVEMENT IN CSS11</scope>
    <scope>INTERACTION WITH SMARCA4 AND SMARCC1</scope>
</reference>
<protein>
    <recommendedName>
        <fullName>SWI/SNF-related matrix-associated actin-dependent regulator of chromatin subfamily D member 1</fullName>
    </recommendedName>
    <alternativeName>
        <fullName>60 kDa BRG-1/Brm-associated factor subunit A</fullName>
    </alternativeName>
    <alternativeName>
        <fullName>BRG1-associated factor 60A</fullName>
        <shortName>BAF60A</shortName>
    </alternativeName>
    <alternativeName>
        <fullName>SWI/SNF complex 60 kDa subunit</fullName>
    </alternativeName>
</protein>
<proteinExistence type="evidence at protein level"/>
<gene>
    <name evidence="19" type="primary">SMARCD1</name>
    <name evidence="17" type="synonym">BAF60A</name>
</gene>
<name>SMRD1_HUMAN</name>
<dbReference type="EMBL" id="AF109733">
    <property type="protein sequence ID" value="AAD23390.1"/>
    <property type="status" value="ALT_INIT"/>
    <property type="molecule type" value="mRNA"/>
</dbReference>
<dbReference type="EMBL" id="U66617">
    <property type="protein sequence ID" value="AAC50695.1"/>
    <property type="status" value="ALT_FRAME"/>
    <property type="molecule type" value="mRNA"/>
</dbReference>
<dbReference type="EMBL" id="AC025154">
    <property type="status" value="NOT_ANNOTATED_CDS"/>
    <property type="molecule type" value="Genomic_DNA"/>
</dbReference>
<dbReference type="EMBL" id="BC009368">
    <property type="protein sequence ID" value="AAH09368.3"/>
    <property type="status" value="ALT_INIT"/>
    <property type="molecule type" value="mRNA"/>
</dbReference>
<dbReference type="CCDS" id="CCDS8797.2">
    <molecule id="Q96GM5-1"/>
</dbReference>
<dbReference type="CCDS" id="CCDS8798.2">
    <molecule id="Q96GM5-2"/>
</dbReference>
<dbReference type="RefSeq" id="NP_003067.3">
    <molecule id="Q96GM5-1"/>
    <property type="nucleotide sequence ID" value="NM_003076.4"/>
</dbReference>
<dbReference type="RefSeq" id="NP_620710.2">
    <molecule id="Q96GM5-2"/>
    <property type="nucleotide sequence ID" value="NM_139071.3"/>
</dbReference>
<dbReference type="PDB" id="6LTH">
    <property type="method" value="EM"/>
    <property type="resolution" value="3.00 A"/>
    <property type="chains" value="P=1-515"/>
</dbReference>
<dbReference type="PDB" id="6LTJ">
    <property type="method" value="EM"/>
    <property type="resolution" value="3.70 A"/>
    <property type="chains" value="P=1-515"/>
</dbReference>
<dbReference type="PDB" id="7VDV">
    <property type="method" value="EM"/>
    <property type="resolution" value="3.40 A"/>
    <property type="chains" value="Y=1-515"/>
</dbReference>
<dbReference type="PDB" id="7Y8R">
    <property type="method" value="EM"/>
    <property type="resolution" value="4.40 A"/>
    <property type="chains" value="P=1-515"/>
</dbReference>
<dbReference type="PDBsum" id="6LTH"/>
<dbReference type="PDBsum" id="6LTJ"/>
<dbReference type="PDBsum" id="7VDV"/>
<dbReference type="PDBsum" id="7Y8R"/>
<dbReference type="EMDB" id="EMD-0974"/>
<dbReference type="EMDB" id="EMD-31926"/>
<dbReference type="EMDB" id="EMD-33684"/>
<dbReference type="SMR" id="Q96GM5"/>
<dbReference type="BioGRID" id="112486">
    <property type="interactions" value="347"/>
</dbReference>
<dbReference type="ComplexPortal" id="CPX-1164">
    <property type="entry name" value="SWI/SNF ATP-dependent chromatin remodeling complex, ACTL6A-ARID1A-SMARCA2 variant"/>
</dbReference>
<dbReference type="ComplexPortal" id="CPX-1194">
    <property type="entry name" value="Muscle cell-specific SWI/SNF ATP-dependent chromatin remodeling complex, ACTL6A-ARID1A-SMARCA2 variant"/>
</dbReference>
<dbReference type="ComplexPortal" id="CPX-1195">
    <property type="entry name" value="Embryonic stem cell-specific SWI/SNF ATP-dependent chromatin remodeling complex"/>
</dbReference>
<dbReference type="ComplexPortal" id="CPX-1196">
    <property type="entry name" value="Polybromo-associated SWI/SNF ATP-dependent chromatin remodeling complex, ACTL6B variant"/>
</dbReference>
<dbReference type="ComplexPortal" id="CPX-1199">
    <property type="entry name" value="Polybromo-associated SWI/SNF ATP-dependent chromatin remodeling complex, ACTL6A variant"/>
</dbReference>
<dbReference type="ComplexPortal" id="CPX-1201">
    <property type="entry name" value="Neural progenitor-specific SWI/SNF ATP-dependent chromatin remodeling complex, ARID1A-SMARCA2 variant"/>
</dbReference>
<dbReference type="ComplexPortal" id="CPX-1202">
    <property type="entry name" value="Neuron-specific SWI/SNF ATP-dependent chromatin remodeling complex, ARID1A-SMARCA2 variant"/>
</dbReference>
<dbReference type="ComplexPortal" id="CPX-1204">
    <property type="entry name" value="SWI/SNF ATP-dependent chromatin remodeling complex, ACTL6A-ARID1A-SMARCA4 variant"/>
</dbReference>
<dbReference type="ComplexPortal" id="CPX-1205">
    <property type="entry name" value="SWI/SNF ATP-dependent chromatin remodeling complex, ACTL6A-ARID1B-SMARCA2 variant"/>
</dbReference>
<dbReference type="ComplexPortal" id="CPX-1206">
    <property type="entry name" value="SWI/SNF ATP-dependent chromatin remodeling complex, ACTL6A-ARID1B-SMARCA4 variant"/>
</dbReference>
<dbReference type="ComplexPortal" id="CPX-1207">
    <property type="entry name" value="SWI/SNF ATP-dependent chromatin remodeling complex, ACTL6B-ARID1A-SMARCA2 variant"/>
</dbReference>
<dbReference type="ComplexPortal" id="CPX-1209">
    <property type="entry name" value="SWI/SNF ATP-dependent chromatin remodeling complex, ACTL6B-ARID1A-SMARCA4 variant"/>
</dbReference>
<dbReference type="ComplexPortal" id="CPX-1210">
    <property type="entry name" value="SWI/SNF ATP-dependent chromatin remodeling complex, ACTL6B-ARID1B-SMARCA2 variant"/>
</dbReference>
<dbReference type="ComplexPortal" id="CPX-1211">
    <property type="entry name" value="SWI/SNF ATP-dependent chromatin remodeling complex, ACTL6B-ARID1B-SMARCA4 variant"/>
</dbReference>
<dbReference type="ComplexPortal" id="CPX-1212">
    <property type="entry name" value="Neural progenitor-specific SWI/SNF ATP-dependent chromatin remodeling complex, ARID1A-SMARCA4 variant"/>
</dbReference>
<dbReference type="ComplexPortal" id="CPX-1213">
    <property type="entry name" value="Neural progenitor-specific SWI/SNF ATP-dependent chromatin remodeling complex, ARID1B-SMARCA2 variant"/>
</dbReference>
<dbReference type="ComplexPortal" id="CPX-1215">
    <property type="entry name" value="Neural progenitor-specific SWI/SNF ATP-dependent chromatin remodeling complex, ARID1B-SMARCA4 variant"/>
</dbReference>
<dbReference type="ComplexPortal" id="CPX-1216">
    <property type="entry name" value="Neuron-specific SWI/SNF ATP-dependent chromatin remodeling complex, ARID1A-SMARCA4 variant"/>
</dbReference>
<dbReference type="ComplexPortal" id="CPX-1217">
    <property type="entry name" value="Neuron-specific SWI/SNF ATP-dependent chromatin remodeling complex, ARID1B-SMARCA2 variant"/>
</dbReference>
<dbReference type="ComplexPortal" id="CPX-1218">
    <property type="entry name" value="Neuron-specific SWI/SNF ATP-dependent chromatin remodeling complex, ARID1B-SMARCA4 variant"/>
</dbReference>
<dbReference type="ComplexPortal" id="CPX-1222">
    <property type="entry name" value="Muscle cell-specific SWI/SNF ATP-dependent chromatin remodeling complex, ACTL6A-ARID1A-SMARCA4 variant"/>
</dbReference>
<dbReference type="ComplexPortal" id="CPX-1223">
    <property type="entry name" value="Muscle cell-specific SWI/SNF ATP-dependent chromatin remodeling complex, ACTL6A-ARID1B-SMARCA2 variant"/>
</dbReference>
<dbReference type="ComplexPortal" id="CPX-1224">
    <property type="entry name" value="Muscle cell-specific SWI/SNF ATP-dependent chromatin remodeling complex, ACTL6A-ARID1B-SMARCA4 variant"/>
</dbReference>
<dbReference type="ComplexPortal" id="CPX-1225">
    <property type="entry name" value="Muscle cell-specific SWI/SNF ATP-dependent chromatin remodeling complex, ACTL6B-ARID1A-SMARCA2 variant"/>
</dbReference>
<dbReference type="ComplexPortal" id="CPX-1226">
    <property type="entry name" value="Muscle cell-specific SWI/SNF ATP-dependent chromatin remodeling complex, ACTL6B-ARID1A-SMARCA4 variant"/>
</dbReference>
<dbReference type="ComplexPortal" id="CPX-1227">
    <property type="entry name" value="Muscle cell-specific SWI/SNF ATP-dependent chromatin remodeling complex, ACTL6B-ARID1B-SMARCA2 variant"/>
</dbReference>
<dbReference type="ComplexPortal" id="CPX-1228">
    <property type="entry name" value="Muscle cell-specific SWI/SNF ATP-dependent chromatin remodeling complex, ACTL6B-ARID1B-SMARCA4 variant"/>
</dbReference>
<dbReference type="ComplexPortal" id="CPX-4084">
    <property type="entry name" value="GBAF (SWI/SNF) ATP-dependent chromatin remodeling complex, ACTL6A-BICRA-SMARCA2 variant"/>
</dbReference>
<dbReference type="ComplexPortal" id="CPX-4203">
    <property type="entry name" value="GBAF (SWI/SNF) ATP-dependent chromatin remodeling complex, ACTL6A-BICRAL-SMARCA2 variant"/>
</dbReference>
<dbReference type="ComplexPortal" id="CPX-4206">
    <property type="entry name" value="GBAF (SWI/SNF) ATP-dependent chromatin remodeling complex, ACTL6A-BICRA-SMARCA4 variant"/>
</dbReference>
<dbReference type="ComplexPortal" id="CPX-4207">
    <property type="entry name" value="GBAF (SWI/SNF) ATP-dependent chromatin remodeling complex, ACTL6A-BICRAL-SMARCA4 variant"/>
</dbReference>
<dbReference type="ComplexPortal" id="CPX-4223">
    <property type="entry name" value="GBAF (SWI/SNF) ATP-dependent chromatin remodeling complex, ACTL6B-BICRA-SMARCA2 variant"/>
</dbReference>
<dbReference type="ComplexPortal" id="CPX-4224">
    <property type="entry name" value="GBAF (SWI/SNF) ATP-dependent chromatin remodeling complex, ACTL6B-BICRAL-SMARCA2 variant"/>
</dbReference>
<dbReference type="ComplexPortal" id="CPX-4225">
    <property type="entry name" value="GBAF (SWI/SNF) ATP-dependent chromatin remodeling complex, ACTL6B-BICRA-SMARCA4 variant"/>
</dbReference>
<dbReference type="ComplexPortal" id="CPX-4226">
    <property type="entry name" value="GBAF (SWI/SNF) ATP-dependent chromatin remodeling complex, ACTL6B-BICRAL-SMARCA4 variant"/>
</dbReference>
<dbReference type="CORUM" id="Q96GM5"/>
<dbReference type="DIP" id="DIP-33390N"/>
<dbReference type="FunCoup" id="Q96GM5">
    <property type="interactions" value="3852"/>
</dbReference>
<dbReference type="IntAct" id="Q96GM5">
    <property type="interactions" value="286"/>
</dbReference>
<dbReference type="MINT" id="Q96GM5"/>
<dbReference type="STRING" id="9606.ENSP00000378414"/>
<dbReference type="GlyGen" id="Q96GM5">
    <property type="glycosylation" value="2 sites, 1 O-linked glycan (1 site)"/>
</dbReference>
<dbReference type="iPTMnet" id="Q96GM5"/>
<dbReference type="MetOSite" id="Q96GM5"/>
<dbReference type="PhosphoSitePlus" id="Q96GM5"/>
<dbReference type="BioMuta" id="SMARCD1"/>
<dbReference type="DMDM" id="238054318"/>
<dbReference type="jPOST" id="Q96GM5"/>
<dbReference type="MassIVE" id="Q96GM5"/>
<dbReference type="PaxDb" id="9606-ENSP00000378414"/>
<dbReference type="PeptideAtlas" id="Q96GM5"/>
<dbReference type="ProteomicsDB" id="76645">
    <molecule id="Q96GM5-1"/>
</dbReference>
<dbReference type="ProteomicsDB" id="76646">
    <molecule id="Q96GM5-2"/>
</dbReference>
<dbReference type="Pumba" id="Q96GM5"/>
<dbReference type="Antibodypedia" id="1319">
    <property type="antibodies" value="274 antibodies from 32 providers"/>
</dbReference>
<dbReference type="DNASU" id="6602"/>
<dbReference type="Ensembl" id="ENST00000381513.8">
    <molecule id="Q96GM5-2"/>
    <property type="protein sequence ID" value="ENSP00000370924.4"/>
    <property type="gene ID" value="ENSG00000066117.15"/>
</dbReference>
<dbReference type="Ensembl" id="ENST00000394963.9">
    <molecule id="Q96GM5-1"/>
    <property type="protein sequence ID" value="ENSP00000378414.4"/>
    <property type="gene ID" value="ENSG00000066117.15"/>
</dbReference>
<dbReference type="GeneID" id="6602"/>
<dbReference type="KEGG" id="hsa:6602"/>
<dbReference type="MANE-Select" id="ENST00000394963.9">
    <property type="protein sequence ID" value="ENSP00000378414.4"/>
    <property type="RefSeq nucleotide sequence ID" value="NM_003076.5"/>
    <property type="RefSeq protein sequence ID" value="NP_003067.3"/>
</dbReference>
<dbReference type="UCSC" id="uc001rvx.5">
    <molecule id="Q96GM5-1"/>
    <property type="organism name" value="human"/>
</dbReference>
<dbReference type="AGR" id="HGNC:11106"/>
<dbReference type="CTD" id="6602"/>
<dbReference type="DisGeNET" id="6602"/>
<dbReference type="GeneCards" id="SMARCD1"/>
<dbReference type="HGNC" id="HGNC:11106">
    <property type="gene designation" value="SMARCD1"/>
</dbReference>
<dbReference type="HPA" id="ENSG00000066117">
    <property type="expression patterns" value="Low tissue specificity"/>
</dbReference>
<dbReference type="MalaCards" id="SMARCD1"/>
<dbReference type="MIM" id="601735">
    <property type="type" value="gene"/>
</dbReference>
<dbReference type="MIM" id="618779">
    <property type="type" value="phenotype"/>
</dbReference>
<dbReference type="neXtProt" id="NX_Q96GM5"/>
<dbReference type="OpenTargets" id="ENSG00000066117"/>
<dbReference type="Orphanet" id="1465">
    <property type="disease" value="Coffin-Siris syndrome"/>
</dbReference>
<dbReference type="PharmGKB" id="PA35956"/>
<dbReference type="VEuPathDB" id="HostDB:ENSG00000066117"/>
<dbReference type="eggNOG" id="KOG2570">
    <property type="taxonomic scope" value="Eukaryota"/>
</dbReference>
<dbReference type="GeneTree" id="ENSGT00940000156629"/>
<dbReference type="HOGENOM" id="CLU_023529_0_1_1"/>
<dbReference type="InParanoid" id="Q96GM5"/>
<dbReference type="OMA" id="NFRCNEP"/>
<dbReference type="OrthoDB" id="10263741at2759"/>
<dbReference type="PAN-GO" id="Q96GM5">
    <property type="GO annotations" value="4 GO annotations based on evolutionary models"/>
</dbReference>
<dbReference type="PhylomeDB" id="Q96GM5"/>
<dbReference type="TreeFam" id="TF106486"/>
<dbReference type="PathwayCommons" id="Q96GM5"/>
<dbReference type="Reactome" id="R-HSA-3214858">
    <property type="pathway name" value="RMTs methylate histone arginines"/>
</dbReference>
<dbReference type="Reactome" id="R-HSA-8939243">
    <property type="pathway name" value="RUNX1 interacts with co-factors whose precise effect on RUNX1 targets is not known"/>
</dbReference>
<dbReference type="Reactome" id="R-HSA-9824585">
    <property type="pathway name" value="Regulation of MITF-M-dependent genes involved in pigmentation"/>
</dbReference>
<dbReference type="Reactome" id="R-HSA-9845323">
    <property type="pathway name" value="Regulation of endogenous retroelements by Piwi-interacting RNAs (piRNAs)"/>
</dbReference>
<dbReference type="SignaLink" id="Q96GM5"/>
<dbReference type="SIGNOR" id="Q96GM5"/>
<dbReference type="BioGRID-ORCS" id="6602">
    <property type="hits" value="132 hits in 1172 CRISPR screens"/>
</dbReference>
<dbReference type="CD-CODE" id="91857CE7">
    <property type="entry name" value="Nucleolus"/>
</dbReference>
<dbReference type="ChiTaRS" id="SMARCD1">
    <property type="organism name" value="human"/>
</dbReference>
<dbReference type="GeneWiki" id="SMARCD1"/>
<dbReference type="GenomeRNAi" id="6602"/>
<dbReference type="Pharos" id="Q96GM5">
    <property type="development level" value="Tbio"/>
</dbReference>
<dbReference type="PRO" id="PR:Q96GM5"/>
<dbReference type="Proteomes" id="UP000005640">
    <property type="component" value="Chromosome 12"/>
</dbReference>
<dbReference type="RNAct" id="Q96GM5">
    <property type="molecule type" value="protein"/>
</dbReference>
<dbReference type="Bgee" id="ENSG00000066117">
    <property type="expression patterns" value="Expressed in ganglionic eminence and 192 other cell types or tissues"/>
</dbReference>
<dbReference type="ExpressionAtlas" id="Q96GM5">
    <property type="expression patterns" value="baseline and differential"/>
</dbReference>
<dbReference type="GO" id="GO:0035060">
    <property type="term" value="C:brahma complex"/>
    <property type="evidence" value="ECO:0000303"/>
    <property type="project" value="ComplexPortal"/>
</dbReference>
<dbReference type="GO" id="GO:0000785">
    <property type="term" value="C:chromatin"/>
    <property type="evidence" value="ECO:0000303"/>
    <property type="project" value="ComplexPortal"/>
</dbReference>
<dbReference type="GO" id="GO:0140288">
    <property type="term" value="C:GBAF complex"/>
    <property type="evidence" value="ECO:0000303"/>
    <property type="project" value="ComplexPortal"/>
</dbReference>
<dbReference type="GO" id="GO:0043231">
    <property type="term" value="C:intracellular membrane-bounded organelle"/>
    <property type="evidence" value="ECO:0000314"/>
    <property type="project" value="HPA"/>
</dbReference>
<dbReference type="GO" id="GO:0000776">
    <property type="term" value="C:kinetochore"/>
    <property type="evidence" value="ECO:0000303"/>
    <property type="project" value="ComplexPortal"/>
</dbReference>
<dbReference type="GO" id="GO:0071565">
    <property type="term" value="C:nBAF complex"/>
    <property type="evidence" value="ECO:0000250"/>
    <property type="project" value="UniProtKB"/>
</dbReference>
<dbReference type="GO" id="GO:0071564">
    <property type="term" value="C:npBAF complex"/>
    <property type="evidence" value="ECO:0000250"/>
    <property type="project" value="UniProtKB"/>
</dbReference>
<dbReference type="GO" id="GO:0016363">
    <property type="term" value="C:nuclear matrix"/>
    <property type="evidence" value="ECO:0000303"/>
    <property type="project" value="ComplexPortal"/>
</dbReference>
<dbReference type="GO" id="GO:0005654">
    <property type="term" value="C:nucleoplasm"/>
    <property type="evidence" value="ECO:0000314"/>
    <property type="project" value="HPA"/>
</dbReference>
<dbReference type="GO" id="GO:0005634">
    <property type="term" value="C:nucleus"/>
    <property type="evidence" value="ECO:0000318"/>
    <property type="project" value="GO_Central"/>
</dbReference>
<dbReference type="GO" id="GO:0016586">
    <property type="term" value="C:RSC-type complex"/>
    <property type="evidence" value="ECO:0000303"/>
    <property type="project" value="ComplexPortal"/>
</dbReference>
<dbReference type="GO" id="GO:0016514">
    <property type="term" value="C:SWI/SNF complex"/>
    <property type="evidence" value="ECO:0000314"/>
    <property type="project" value="UniProtKB"/>
</dbReference>
<dbReference type="GO" id="GO:0003682">
    <property type="term" value="F:chromatin binding"/>
    <property type="evidence" value="ECO:0007669"/>
    <property type="project" value="Ensembl"/>
</dbReference>
<dbReference type="GO" id="GO:0060090">
    <property type="term" value="F:molecular adaptor activity"/>
    <property type="evidence" value="ECO:0000314"/>
    <property type="project" value="UniProtKB"/>
</dbReference>
<dbReference type="GO" id="GO:0005102">
    <property type="term" value="F:signaling receptor binding"/>
    <property type="evidence" value="ECO:0007669"/>
    <property type="project" value="Ensembl"/>
</dbReference>
<dbReference type="GO" id="GO:0003713">
    <property type="term" value="F:transcription coactivator activity"/>
    <property type="evidence" value="ECO:0000303"/>
    <property type="project" value="BHF-UCL"/>
</dbReference>
<dbReference type="GO" id="GO:0003712">
    <property type="term" value="F:transcription coregulator activity"/>
    <property type="evidence" value="ECO:0000318"/>
    <property type="project" value="GO_Central"/>
</dbReference>
<dbReference type="GO" id="GO:0071398">
    <property type="term" value="P:cellular response to fatty acid"/>
    <property type="evidence" value="ECO:0007669"/>
    <property type="project" value="Ensembl"/>
</dbReference>
<dbReference type="GO" id="GO:0006338">
    <property type="term" value="P:chromatin remodeling"/>
    <property type="evidence" value="ECO:0000314"/>
    <property type="project" value="BHF-UCL"/>
</dbReference>
<dbReference type="GO" id="GO:0045596">
    <property type="term" value="P:negative regulation of cell differentiation"/>
    <property type="evidence" value="ECO:0000303"/>
    <property type="project" value="ComplexPortal"/>
</dbReference>
<dbReference type="GO" id="GO:0007399">
    <property type="term" value="P:nervous system development"/>
    <property type="evidence" value="ECO:0007669"/>
    <property type="project" value="UniProtKB-KW"/>
</dbReference>
<dbReference type="GO" id="GO:0006337">
    <property type="term" value="P:nucleosome disassembly"/>
    <property type="evidence" value="ECO:0000314"/>
    <property type="project" value="BHF-UCL"/>
</dbReference>
<dbReference type="GO" id="GO:0045597">
    <property type="term" value="P:positive regulation of cell differentiation"/>
    <property type="evidence" value="ECO:0000303"/>
    <property type="project" value="ComplexPortal"/>
</dbReference>
<dbReference type="GO" id="GO:0008284">
    <property type="term" value="P:positive regulation of cell population proliferation"/>
    <property type="evidence" value="ECO:0000303"/>
    <property type="project" value="ComplexPortal"/>
</dbReference>
<dbReference type="GO" id="GO:2000781">
    <property type="term" value="P:positive regulation of double-strand break repair"/>
    <property type="evidence" value="ECO:0000303"/>
    <property type="project" value="ComplexPortal"/>
</dbReference>
<dbReference type="GO" id="GO:0045663">
    <property type="term" value="P:positive regulation of myoblast differentiation"/>
    <property type="evidence" value="ECO:0000303"/>
    <property type="project" value="ComplexPortal"/>
</dbReference>
<dbReference type="GO" id="GO:1902459">
    <property type="term" value="P:positive regulation of stem cell population maintenance"/>
    <property type="evidence" value="ECO:0000303"/>
    <property type="project" value="ComplexPortal"/>
</dbReference>
<dbReference type="GO" id="GO:0045582">
    <property type="term" value="P:positive regulation of T cell differentiation"/>
    <property type="evidence" value="ECO:0000303"/>
    <property type="project" value="ComplexPortal"/>
</dbReference>
<dbReference type="GO" id="GO:0070316">
    <property type="term" value="P:regulation of G0 to G1 transition"/>
    <property type="evidence" value="ECO:0000303"/>
    <property type="project" value="ComplexPortal"/>
</dbReference>
<dbReference type="GO" id="GO:2000045">
    <property type="term" value="P:regulation of G1/S transition of mitotic cell cycle"/>
    <property type="evidence" value="ECO:0000303"/>
    <property type="project" value="ComplexPortal"/>
</dbReference>
<dbReference type="GO" id="GO:0030071">
    <property type="term" value="P:regulation of mitotic metaphase/anaphase transition"/>
    <property type="evidence" value="ECO:0000303"/>
    <property type="project" value="ComplexPortal"/>
</dbReference>
<dbReference type="GO" id="GO:2000819">
    <property type="term" value="P:regulation of nucleotide-excision repair"/>
    <property type="evidence" value="ECO:0000303"/>
    <property type="project" value="ComplexPortal"/>
</dbReference>
<dbReference type="GO" id="GO:0006357">
    <property type="term" value="P:regulation of transcription by RNA polymerase II"/>
    <property type="evidence" value="ECO:0000318"/>
    <property type="project" value="GO_Central"/>
</dbReference>
<dbReference type="GO" id="GO:0045815">
    <property type="term" value="P:transcription initiation-coupled chromatin remodeling"/>
    <property type="evidence" value="ECO:0000315"/>
    <property type="project" value="UniProtKB"/>
</dbReference>
<dbReference type="CDD" id="cd17674">
    <property type="entry name" value="SWIB_BAF60A"/>
    <property type="match status" value="1"/>
</dbReference>
<dbReference type="FunFam" id="1.10.245.10:FF:000001">
    <property type="entry name" value="SWI/SNF-related matrix-associated regulator of chromatin subfamily D member 3 isoform 1"/>
    <property type="match status" value="1"/>
</dbReference>
<dbReference type="Gene3D" id="1.10.245.10">
    <property type="entry name" value="SWIB/MDM2 domain"/>
    <property type="match status" value="1"/>
</dbReference>
<dbReference type="InterPro" id="IPR038041">
    <property type="entry name" value="SMARCD1_SWIB_dom"/>
</dbReference>
<dbReference type="InterPro" id="IPR019835">
    <property type="entry name" value="SWIB_domain"/>
</dbReference>
<dbReference type="InterPro" id="IPR036885">
    <property type="entry name" value="SWIB_MDM2_dom_sf"/>
</dbReference>
<dbReference type="InterPro" id="IPR003121">
    <property type="entry name" value="SWIB_MDM2_domain"/>
</dbReference>
<dbReference type="PANTHER" id="PTHR13844">
    <property type="entry name" value="SWI/SNF-RELATED MATRIX-ASSOCIATED ACTIN-DEPENDENT REGULATOR OF CHROMATIN SUBFAMILY D"/>
    <property type="match status" value="1"/>
</dbReference>
<dbReference type="Pfam" id="PF02201">
    <property type="entry name" value="SWIB"/>
    <property type="match status" value="1"/>
</dbReference>
<dbReference type="SMART" id="SM00151">
    <property type="entry name" value="SWIB"/>
    <property type="match status" value="1"/>
</dbReference>
<dbReference type="SUPFAM" id="SSF47592">
    <property type="entry name" value="SWIB/MDM2 domain"/>
    <property type="match status" value="1"/>
</dbReference>
<dbReference type="PROSITE" id="PS51925">
    <property type="entry name" value="SWIB_MDM2"/>
    <property type="match status" value="1"/>
</dbReference>
<comment type="function">
    <text evidence="1 6 7 10 13 15 16">Involved in transcriptional activation and repression of select genes by chromatin remodeling (alteration of DNA-nucleosome topology). Component of SWI/SNF chromatin remodeling complexes that carry out key enzymatic activities, changing chromatin structure by altering DNA-histone contacts within a nucleosome in an ATP-dependent manner (PubMed:29374058, PubMed:8804307). Belongs to the neural progenitors-specific chromatin remodeling complex (npBAF complex) and the neuron-specific chromatin remodeling complex (nBAF complex). During neural development a switch from a stem/progenitor to a postmitotic chromatin remodeling mechanism occurs as neurons exit the cell cycle and become committed to their adult state. The transition from proliferating neural stem/progenitor cells to postmitotic neurons requires a switch in subunit composition of the npBAF and nBAF complexes. As neural progenitors exit mitosis and differentiate into neurons, npBAF complexes which contain ACTL6A/BAF53A and PHF10/BAF45A, are exchanged for homologous alternative ACTL6B/BAF53B and DPF1/BAF45B or DPF3/BAF45C subunits in neuron-specific complexes (nBAF). The npBAF complex is essential for the self-renewal/proliferative capacity of the multipotent neural stem cells. The nBAF complex along with CREST plays a role regulating the activity of genes essential for dendrite growth (By similarity). Has a strong influence on vitamin D-mediated transcriptional activity from an enhancer vitamin D receptor element (VDRE). May be a link between mammalian SWI-SNF-like chromatin remodeling complexes and the vitamin D receptor (VDR) heterodimer (PubMed:14698202). Mediates critical interactions between nuclear receptors and the BRG1/SMARCA4 chromatin-remodeling complex for transactivation (PubMed:12917342). Interacts with AKIRIN2 (By similarity).</text>
</comment>
<comment type="subunit">
    <text evidence="1 6 7 8 9 10 11 12 14 15 16">Component of the multiprotein chromatin-remodeling complexes SWI/SNF: SWI/SNF-A (BAF), SWI/SNF-B (PBAF) and related complexes. The canonical complex contains a catalytic subunit (either SMARCA4/BRG1/BAF190A or SMARCA2/BRM/BAF190B), and at least SMARCE1, ACTL6A/BAF53, SMARCC1/BAF155, SMARCC2/BAF170, and SMARCB1/SNF5/BAF47. Other subunits specific to each of the complexes may also be present permitting several possible combinations developmentally and tissue specific (PubMed:8895581). Component of the BAF complex, which includes at least actin (ACTB), ARID1A/BAF250A, ARID1B/BAF250B, SMARCA2/BRM, SMARCA4/BRG1/BAF190A, ACTL6A/BAF53, ACTL6B/BAF53B, SMARCE1/BAF57, SMARCC1/BAF155, SMARCC2/BAF170, SMARCB1/SNF5/INI1, and one or more SMARCD1/BAF60A, SMARCD2/BAF60B, or SMARCD3/BAF60C (PubMed:18765789). In muscle cells, the BAF complex also contains DPF3. Component of neural progenitors-specific chromatin remodeling complex (npBAF complex) composed of at least, ARID1A/BAF250A or ARID1B/BAF250B, SMARCD1/BAF60A, SMARCD3/BAF60C, SMARCA2/BRM/BAF190B, SMARCA4/BRG1/BAF190A, SMARCB1/BAF47, SMARCC1/BAF155, SMARCE1/BAF57, SMARCC2/BAF170, PHF10/BAF45A, ACTL6A/BAF53A and actin. Component of neuron-specific chromatin remodeling complex (nBAF complex) composed of at least, ARID1A/BAF250A or ARID1B/BAF250B, SMARCD1/BAF60A, SMARCD3/BAF60C, SMARCA2/BRM/BAF190B, SMARCA4/BRG1/BAF190A, SMARCB1/BAF47, SMARCC1/BAF155, SMARCE1/BAF57, SMARCC2/BAF170, DPF1/BAF45B, DPF3/BAF45C, ACTL6B/BAF53B and actin (By similarity). Component of the SWI/SNF-B (PBAF) chromatin remodeling complex, at least composed of SMARCA4/BRG1, SMARCB1/BAF47/SNF5, ACTL6A/BAF53A or ACTL6B/BAF53B, SMARCE1/BAF57, SMARCD1/BAF60A, SMARCD2/BAF60B, perhaps SMARCD3/BAF60C, SMARCC1/BAF155, SMARCC2/BAF170, PBRM1/BAF180, ARID2/BAF200 and actin (ACTB) (PubMed:22952240, PubMed:26601204). Component of SWI/SNF (GBAF) subcomplex, which includes at least BICRA or BICRAL (mutually exclusive), BRD9, SS18, SMARCA2/BRM, SMARCA4/BRG1/BAF190A, ACTL6A/BAF53, SMARCC1/BAF155, and SMARCD1/BAF60A (PubMed:29374058). Specifically interacts with the VDR heterodimer complex (PubMed:14698202). Interacts with ESR1, NR3C1, NR1H4, PGR, SMARCA4, SMARCC1 and SMARCC2 (PubMed:12917342, PubMed:30879640). Interacts with DPF2 (PubMed:20460684). Interacts with DPF3a (isoform 2 of DPF3/BAF45C) and with HDGFL2 in a DPF3a-dependent manner (PubMed:32459350). Interacts with FOS, FOSB isoform 1 and 2, FOSL1 and FOSL2 (By similarity).</text>
</comment>
<comment type="interaction">
    <interactant intactId="EBI-358489">
        <id>Q96GM5</id>
    </interactant>
    <interactant intactId="EBI-11743294">
        <id>Q8IZP0-5</id>
        <label>ABI1</label>
    </interactant>
    <organismsDiffer>false</organismsDiffer>
    <experiments>3</experiments>
</comment>
<comment type="interaction">
    <interactant intactId="EBI-358489">
        <id>Q96GM5</id>
    </interactant>
    <interactant intactId="EBI-11096309">
        <id>Q9NYB9-2</id>
        <label>ABI2</label>
    </interactant>
    <organismsDiffer>false</organismsDiffer>
    <experiments>3</experiments>
</comment>
<comment type="interaction">
    <interactant intactId="EBI-358489">
        <id>Q96GM5</id>
    </interactant>
    <interactant intactId="EBI-742038">
        <id>Q9P2A4</id>
        <label>ABI3</label>
    </interactant>
    <organismsDiffer>false</organismsDiffer>
    <experiments>3</experiments>
</comment>
<comment type="interaction">
    <interactant intactId="EBI-358489">
        <id>Q96GM5</id>
    </interactant>
    <interactant intactId="EBI-11976299">
        <id>Q5BKX5-3</id>
        <label>ACTMAP</label>
    </interactant>
    <organismsDiffer>false</organismsDiffer>
    <experiments>3</experiments>
</comment>
<comment type="interaction">
    <interactant intactId="EBI-358489">
        <id>Q96GM5</id>
    </interactant>
    <interactant intactId="EBI-2809203">
        <id>Q7Z6V5</id>
        <label>ADAT2</label>
    </interactant>
    <organismsDiffer>false</organismsDiffer>
    <experiments>3</experiments>
</comment>
<comment type="interaction">
    <interactant intactId="EBI-358489">
        <id>Q96GM5</id>
    </interactant>
    <interactant intactId="EBI-8643161">
        <id>Q9NX04</id>
        <label>AIRIM</label>
    </interactant>
    <organismsDiffer>false</organismsDiffer>
    <experiments>3</experiments>
</comment>
<comment type="interaction">
    <interactant intactId="EBI-358489">
        <id>Q96GM5</id>
    </interactant>
    <interactant intactId="EBI-5661893">
        <id>Q86SG2</id>
        <label>ANKRD23</label>
    </interactant>
    <organismsDiffer>false</organismsDiffer>
    <experiments>3</experiments>
</comment>
<comment type="interaction">
    <interactant intactId="EBI-358489">
        <id>Q96GM5</id>
    </interactant>
    <interactant intactId="EBI-9381820">
        <id>Q8WVL7</id>
        <label>ANKRD49</label>
    </interactant>
    <organismsDiffer>false</organismsDiffer>
    <experiments>4</experiments>
</comment>
<comment type="interaction">
    <interactant intactId="EBI-358489">
        <id>Q96GM5</id>
    </interactant>
    <interactant intactId="EBI-12902762">
        <id>Q8N2F6-2</id>
        <label>ARMC10</label>
    </interactant>
    <organismsDiffer>false</organismsDiffer>
    <experiments>3</experiments>
</comment>
<comment type="interaction">
    <interactant intactId="EBI-358489">
        <id>Q96GM5</id>
    </interactant>
    <interactant intactId="EBI-2875665">
        <id>Q96B67</id>
        <label>ARRDC3</label>
    </interactant>
    <organismsDiffer>false</organismsDiffer>
    <experiments>3</experiments>
</comment>
<comment type="interaction">
    <interactant intactId="EBI-358489">
        <id>Q96GM5</id>
    </interactant>
    <interactant intactId="EBI-930964">
        <id>P54253</id>
        <label>ATXN1</label>
    </interactant>
    <organismsDiffer>false</organismsDiffer>
    <experiments>6</experiments>
</comment>
<comment type="interaction">
    <interactant intactId="EBI-358489">
        <id>Q96GM5</id>
    </interactant>
    <interactant intactId="EBI-10988864">
        <id>P46379-2</id>
        <label>BAG6</label>
    </interactant>
    <organismsDiffer>false</organismsDiffer>
    <experiments>3</experiments>
</comment>
<comment type="interaction">
    <interactant intactId="EBI-358489">
        <id>Q96GM5</id>
    </interactant>
    <interactant intactId="EBI-1050106">
        <id>O75934</id>
        <label>BCAS2</label>
    </interactant>
    <organismsDiffer>false</organismsDiffer>
    <experiments>3</experiments>
</comment>
<comment type="interaction">
    <interactant intactId="EBI-358489">
        <id>Q96GM5</id>
    </interactant>
    <interactant intactId="EBI-724373">
        <id>Q7L4P6</id>
        <label>BEND5</label>
    </interactant>
    <organismsDiffer>false</organismsDiffer>
    <experiments>3</experiments>
</comment>
<comment type="interaction">
    <interactant intactId="EBI-358489">
        <id>Q96GM5</id>
    </interactant>
    <interactant intactId="EBI-741753">
        <id>Q00994</id>
        <label>BEX3</label>
    </interactant>
    <organismsDiffer>false</organismsDiffer>
    <experiments>3</experiments>
</comment>
<comment type="interaction">
    <interactant intactId="EBI-358489">
        <id>Q96GM5</id>
    </interactant>
    <interactant intactId="EBI-465861">
        <id>Q8TDH9</id>
        <label>BLOC1S5</label>
    </interactant>
    <organismsDiffer>false</organismsDiffer>
    <experiments>3</experiments>
</comment>
<comment type="interaction">
    <interactant intactId="EBI-358489">
        <id>Q96GM5</id>
    </interactant>
    <interactant intactId="EBI-10693038">
        <id>Q9NSI6-4</id>
        <label>BRWD1</label>
    </interactant>
    <organismsDiffer>false</organismsDiffer>
    <experiments>3</experiments>
</comment>
<comment type="interaction">
    <interactant intactId="EBI-358489">
        <id>Q96GM5</id>
    </interactant>
    <interactant intactId="EBI-739580">
        <id>Q13137</id>
        <label>CALCOCO2</label>
    </interactant>
    <organismsDiffer>false</organismsDiffer>
    <experiments>3</experiments>
</comment>
<comment type="interaction">
    <interactant intactId="EBI-358489">
        <id>Q96GM5</id>
    </interactant>
    <interactant intactId="EBI-10171570">
        <id>Q68D86</id>
        <label>CCDC102B</label>
    </interactant>
    <organismsDiffer>false</organismsDiffer>
    <experiments>3</experiments>
</comment>
<comment type="interaction">
    <interactant intactId="EBI-358489">
        <id>Q96GM5</id>
    </interactant>
    <interactant intactId="EBI-750686">
        <id>Q8NCU1</id>
        <label>CCDC197</label>
    </interactant>
    <organismsDiffer>false</organismsDiffer>
    <experiments>3</experiments>
</comment>
<comment type="interaction">
    <interactant intactId="EBI-358489">
        <id>Q96GM5</id>
    </interactant>
    <interactant intactId="EBI-1181367">
        <id>Q01850</id>
        <label>CDR2</label>
    </interactant>
    <organismsDiffer>false</organismsDiffer>
    <experiments>3</experiments>
</comment>
<comment type="interaction">
    <interactant intactId="EBI-358489">
        <id>Q96GM5</id>
    </interactant>
    <interactant intactId="EBI-4314501">
        <id>P40199</id>
        <label>CEACAM6</label>
    </interactant>
    <organismsDiffer>false</organismsDiffer>
    <experiments>3</experiments>
</comment>
<comment type="interaction">
    <interactant intactId="EBI-358489">
        <id>Q96GM5</id>
    </interactant>
    <interactant intactId="EBI-3866319">
        <id>Q9Y2V7</id>
        <label>COG6</label>
    </interactant>
    <organismsDiffer>false</organismsDiffer>
    <experiments>3</experiments>
</comment>
<comment type="interaction">
    <interactant intactId="EBI-358489">
        <id>Q96GM5</id>
    </interactant>
    <interactant intactId="EBI-983038">
        <id>P08123</id>
        <label>COL1A2</label>
    </interactant>
    <organismsDiffer>false</organismsDiffer>
    <experiments>3</experiments>
</comment>
<comment type="interaction">
    <interactant intactId="EBI-358489">
        <id>Q96GM5</id>
    </interactant>
    <interactant intactId="EBI-21553822">
        <id>Q96A83-2</id>
        <label>COL26A1</label>
    </interactant>
    <organismsDiffer>false</organismsDiffer>
    <experiments>3</experiments>
</comment>
<comment type="interaction">
    <interactant intactId="EBI-358489">
        <id>Q96GM5</id>
    </interactant>
    <interactant intactId="EBI-5838167">
        <id>Q9NWM3</id>
        <label>CUEDC1</label>
    </interactant>
    <organismsDiffer>false</organismsDiffer>
    <experiments>3</experiments>
</comment>
<comment type="interaction">
    <interactant intactId="EBI-358489">
        <id>Q96GM5</id>
    </interactant>
    <interactant intactId="EBI-3867333">
        <id>A8MQ03</id>
        <label>CYSRT1</label>
    </interactant>
    <organismsDiffer>false</organismsDiffer>
    <experiments>3</experiments>
</comment>
<comment type="interaction">
    <interactant intactId="EBI-358489">
        <id>Q96GM5</id>
    </interactant>
    <interactant intactId="EBI-715074">
        <id>Q13561</id>
        <label>DCTN2</label>
    </interactant>
    <organismsDiffer>false</organismsDiffer>
    <experiments>3</experiments>
</comment>
<comment type="interaction">
    <interactant intactId="EBI-358489">
        <id>Q96GM5</id>
    </interactant>
    <interactant intactId="EBI-11988027">
        <id>Q9NRI5-2</id>
        <label>DISC1</label>
    </interactant>
    <organismsDiffer>false</organismsDiffer>
    <experiments>3</experiments>
</comment>
<comment type="interaction">
    <interactant intactId="EBI-358489">
        <id>Q96GM5</id>
    </interactant>
    <interactant intactId="EBI-395638">
        <id>O14645</id>
        <label>DNALI1</label>
    </interactant>
    <organismsDiffer>false</organismsDiffer>
    <experiments>3</experiments>
</comment>
<comment type="interaction">
    <interactant intactId="EBI-358489">
        <id>Q96GM5</id>
    </interactant>
    <interactant intactId="EBI-12012124">
        <id>Q04637-9</id>
        <label>EIF4G1</label>
    </interactant>
    <organismsDiffer>false</organismsDiffer>
    <experiments>3</experiments>
</comment>
<comment type="interaction">
    <interactant intactId="EBI-358489">
        <id>Q96GM5</id>
    </interactant>
    <interactant intactId="EBI-12089140">
        <id>A0A0A0MR80</id>
        <label>EP400</label>
    </interactant>
    <organismsDiffer>false</organismsDiffer>
    <experiments>3</experiments>
</comment>
<comment type="interaction">
    <interactant intactId="EBI-358489">
        <id>Q96GM5</id>
    </interactant>
    <interactant intactId="EBI-3928124">
        <id>Q96DF8</id>
        <label>ESS2</label>
    </interactant>
    <organismsDiffer>false</organismsDiffer>
    <experiments>3</experiments>
</comment>
<comment type="interaction">
    <interactant intactId="EBI-358489">
        <id>Q96GM5</id>
    </interactant>
    <interactant intactId="EBI-373319">
        <id>Q96C01</id>
        <label>FAM136A</label>
    </interactant>
    <organismsDiffer>false</organismsDiffer>
    <experiments>3</experiments>
</comment>
<comment type="interaction">
    <interactant intactId="EBI-358489">
        <id>Q96GM5</id>
    </interactant>
    <interactant intactId="EBI-719941">
        <id>Q3B820</id>
        <label>FAM161A</label>
    </interactant>
    <organismsDiffer>false</organismsDiffer>
    <experiments>3</experiments>
</comment>
<comment type="interaction">
    <interactant intactId="EBI-358489">
        <id>Q96GM5</id>
    </interactant>
    <interactant intactId="EBI-9641086">
        <id>P21333-2</id>
        <label>FLNA</label>
    </interactant>
    <organismsDiffer>false</organismsDiffer>
    <experiments>3</experiments>
</comment>
<comment type="interaction">
    <interactant intactId="EBI-358489">
        <id>Q96GM5</id>
    </interactant>
    <interactant intactId="EBI-744302">
        <id>P14136</id>
        <label>GFAP</label>
    </interactant>
    <organismsDiffer>false</organismsDiffer>
    <experiments>3</experiments>
</comment>
<comment type="interaction">
    <interactant intactId="EBI-358489">
        <id>Q96GM5</id>
    </interactant>
    <interactant intactId="EBI-947774">
        <id>O75420</id>
        <label>GIGYF1</label>
    </interactant>
    <organismsDiffer>false</organismsDiffer>
    <experiments>3</experiments>
</comment>
<comment type="interaction">
    <interactant intactId="EBI-358489">
        <id>Q96GM5</id>
    </interactant>
    <interactant intactId="EBI-2857315">
        <id>Q9BRX5</id>
        <label>GINS3</label>
    </interactant>
    <organismsDiffer>false</organismsDiffer>
    <experiments>3</experiments>
</comment>
<comment type="interaction">
    <interactant intactId="EBI-358489">
        <id>Q96GM5</id>
    </interactant>
    <interactant intactId="EBI-5916454">
        <id>A6NEM1</id>
        <label>GOLGA6L9</label>
    </interactant>
    <organismsDiffer>false</organismsDiffer>
    <experiments>3</experiments>
</comment>
<comment type="interaction">
    <interactant intactId="EBI-358489">
        <id>Q96GM5</id>
    </interactant>
    <interactant intactId="EBI-11519926">
        <id>Q6PI77</id>
        <label>GPRASP3</label>
    </interactant>
    <organismsDiffer>false</organismsDiffer>
    <experiments>3</experiments>
</comment>
<comment type="interaction">
    <interactant intactId="EBI-358489">
        <id>Q96GM5</id>
    </interactant>
    <interactant intactId="EBI-10962409">
        <id>Q6IC98</id>
        <label>GRAMD4</label>
    </interactant>
    <organismsDiffer>false</organismsDiffer>
    <experiments>3</experiments>
</comment>
<comment type="interaction">
    <interactant intactId="EBI-358489">
        <id>Q96GM5</id>
    </interactant>
    <interactant intactId="EBI-7469266">
        <id>Q96HZ4</id>
        <label>HES6</label>
    </interactant>
    <organismsDiffer>false</organismsDiffer>
    <experiments>3</experiments>
</comment>
<comment type="interaction">
    <interactant intactId="EBI-358489">
        <id>Q96GM5</id>
    </interactant>
    <interactant intactId="EBI-3957655">
        <id>P31249</id>
        <label>HOXD3</label>
    </interactant>
    <organismsDiffer>false</organismsDiffer>
    <experiments>3</experiments>
</comment>
<comment type="interaction">
    <interactant intactId="EBI-358489">
        <id>Q96GM5</id>
    </interactant>
    <interactant intactId="EBI-7116203">
        <id>O75031</id>
        <label>HSF2BP</label>
    </interactant>
    <organismsDiffer>false</organismsDiffer>
    <experiments>3</experiments>
</comment>
<comment type="interaction">
    <interactant intactId="EBI-358489">
        <id>Q96GM5</id>
    </interactant>
    <interactant intactId="EBI-517086">
        <id>O43464</id>
        <label>HTRA2</label>
    </interactant>
    <organismsDiffer>false</organismsDiffer>
    <experiments>3</experiments>
</comment>
<comment type="interaction">
    <interactant intactId="EBI-358489">
        <id>Q96GM5</id>
    </interactant>
    <interactant intactId="EBI-466029">
        <id>P42858</id>
        <label>HTT</label>
    </interactant>
    <organismsDiffer>false</organismsDiffer>
    <experiments>12</experiments>
</comment>
<comment type="interaction">
    <interactant intactId="EBI-358489">
        <id>Q96GM5</id>
    </interactant>
    <interactant intactId="EBI-12190633">
        <id>Q70UQ0-4</id>
        <label>IKBIP</label>
    </interactant>
    <organismsDiffer>false</organismsDiffer>
    <experiments>3</experiments>
</comment>
<comment type="interaction">
    <interactant intactId="EBI-358489">
        <id>Q96GM5</id>
    </interactant>
    <interactant intactId="EBI-747204">
        <id>Q9UKT9</id>
        <label>IKZF3</label>
    </interactant>
    <organismsDiffer>false</organismsDiffer>
    <experiments>3</experiments>
</comment>
<comment type="interaction">
    <interactant intactId="EBI-358489">
        <id>Q96GM5</id>
    </interactant>
    <interactant intactId="EBI-12081118">
        <id>Q1MX18</id>
        <label>INSC</label>
    </interactant>
    <organismsDiffer>false</organismsDiffer>
    <experiments>3</experiments>
</comment>
<comment type="interaction">
    <interactant intactId="EBI-358489">
        <id>Q96GM5</id>
    </interactant>
    <interactant intactId="EBI-11944935">
        <id>Q15051-2</id>
        <label>IQCB1</label>
    </interactant>
    <organismsDiffer>false</organismsDiffer>
    <experiments>3</experiments>
</comment>
<comment type="interaction">
    <interactant intactId="EBI-358489">
        <id>Q96GM5</id>
    </interactant>
    <interactant intactId="EBI-1055254">
        <id>Q8WXH2</id>
        <label>JPH3</label>
    </interactant>
    <organismsDiffer>false</organismsDiffer>
    <experiments>3</experiments>
</comment>
<comment type="interaction">
    <interactant intactId="EBI-358489">
        <id>Q96GM5</id>
    </interactant>
    <interactant intactId="EBI-715394">
        <id>Q9H079</id>
        <label>KATNBL1</label>
    </interactant>
    <organismsDiffer>false</organismsDiffer>
    <experiments>3</experiments>
</comment>
<comment type="interaction">
    <interactant intactId="EBI-358489">
        <id>Q96GM5</id>
    </interactant>
    <interactant intactId="EBI-751001">
        <id>Q14145</id>
        <label>KEAP1</label>
    </interactant>
    <organismsDiffer>false</organismsDiffer>
    <experiments>3</experiments>
</comment>
<comment type="interaction">
    <interactant intactId="EBI-358489">
        <id>Q96GM5</id>
    </interactant>
    <interactant intactId="EBI-2805604">
        <id>Q2KHM9</id>
        <label>KIAA0753</label>
    </interactant>
    <organismsDiffer>false</organismsDiffer>
    <experiments>3</experiments>
</comment>
<comment type="interaction">
    <interactant intactId="EBI-358489">
        <id>Q96GM5</id>
    </interactant>
    <interactant intactId="EBI-948266">
        <id>O14901</id>
        <label>KLF11</label>
    </interactant>
    <organismsDiffer>false</organismsDiffer>
    <experiments>3</experiments>
</comment>
<comment type="interaction">
    <interactant intactId="EBI-358489">
        <id>Q96GM5</id>
    </interactant>
    <interactant intactId="EBI-739566">
        <id>P19012</id>
        <label>KRT15</label>
    </interactant>
    <organismsDiffer>false</organismsDiffer>
    <experiments>4</experiments>
</comment>
<comment type="interaction">
    <interactant intactId="EBI-358489">
        <id>Q96GM5</id>
    </interactant>
    <interactant intactId="EBI-356410">
        <id>P08779</id>
        <label>KRT16</label>
    </interactant>
    <organismsDiffer>false</organismsDiffer>
    <experiments>3</experiments>
</comment>
<comment type="interaction">
    <interactant intactId="EBI-358489">
        <id>Q96GM5</id>
    </interactant>
    <interactant intactId="EBI-3044087">
        <id>Q7Z3Y8</id>
        <label>KRT27</label>
    </interactant>
    <organismsDiffer>false</organismsDiffer>
    <experiments>3</experiments>
</comment>
<comment type="interaction">
    <interactant intactId="EBI-358489">
        <id>Q96GM5</id>
    </interactant>
    <interactant intactId="EBI-948001">
        <id>Q15323</id>
        <label>KRT31</label>
    </interactant>
    <organismsDiffer>false</organismsDiffer>
    <experiments>3</experiments>
</comment>
<comment type="interaction">
    <interactant intactId="EBI-358489">
        <id>Q96GM5</id>
    </interactant>
    <interactant intactId="EBI-1047093">
        <id>O76011</id>
        <label>KRT34</label>
    </interactant>
    <organismsDiffer>false</organismsDiffer>
    <experiments>3</experiments>
</comment>
<comment type="interaction">
    <interactant intactId="EBI-358489">
        <id>Q96GM5</id>
    </interactant>
    <interactant intactId="EBI-1045716">
        <id>O76014</id>
        <label>KRT37</label>
    </interactant>
    <organismsDiffer>false</organismsDiffer>
    <experiments>3</experiments>
</comment>
<comment type="interaction">
    <interactant intactId="EBI-358489">
        <id>Q96GM5</id>
    </interactant>
    <interactant intactId="EBI-1047263">
        <id>O76015</id>
        <label>KRT38</label>
    </interactant>
    <organismsDiffer>false</organismsDiffer>
    <experiments>3</experiments>
</comment>
<comment type="interaction">
    <interactant intactId="EBI-358489">
        <id>Q96GM5</id>
    </interactant>
    <interactant intactId="EBI-2949715">
        <id>O95678</id>
        <label>KRT75</label>
    </interactant>
    <organismsDiffer>false</organismsDiffer>
    <experiments>3</experiments>
</comment>
<comment type="interaction">
    <interactant intactId="EBI-358489">
        <id>Q96GM5</id>
    </interactant>
    <interactant intactId="EBI-2865580">
        <id>O43679</id>
        <label>LDB2</label>
    </interactant>
    <organismsDiffer>false</organismsDiffer>
    <experiments>3</experiments>
</comment>
<comment type="interaction">
    <interactant intactId="EBI-358489">
        <id>Q96GM5</id>
    </interactant>
    <interactant intactId="EBI-740738">
        <id>O95751</id>
        <label>LDOC1</label>
    </interactant>
    <organismsDiffer>false</organismsDiffer>
    <experiments>5</experiments>
</comment>
<comment type="interaction">
    <interactant intactId="EBI-358489">
        <id>Q96GM5</id>
    </interactant>
    <interactant intactId="EBI-4314821">
        <id>Q13449</id>
        <label>LSAMP</label>
    </interactant>
    <organismsDiffer>false</organismsDiffer>
    <experiments>3</experiments>
</comment>
<comment type="interaction">
    <interactant intactId="EBI-358489">
        <id>Q96GM5</id>
    </interactant>
    <interactant intactId="EBI-741037">
        <id>Q9BRK4</id>
        <label>LZTS2</label>
    </interactant>
    <organismsDiffer>false</organismsDiffer>
    <experiments>3</experiments>
</comment>
<comment type="interaction">
    <interactant intactId="EBI-358489">
        <id>Q96GM5</id>
    </interactant>
    <interactant intactId="EBI-5650739">
        <id>P43356</id>
        <label>MAGEA2B</label>
    </interactant>
    <organismsDiffer>false</organismsDiffer>
    <experiments>3</experiments>
</comment>
<comment type="interaction">
    <interactant intactId="EBI-358489">
        <id>Q96GM5</id>
    </interactant>
    <interactant intactId="EBI-1045155">
        <id>P43360</id>
        <label>MAGEA6</label>
    </interactant>
    <organismsDiffer>false</organismsDiffer>
    <experiments>3</experiments>
</comment>
<comment type="interaction">
    <interactant intactId="EBI-358489">
        <id>Q96GM5</id>
    </interactant>
    <interactant intactId="EBI-394607">
        <id>Q9NPJ6</id>
        <label>MED4</label>
    </interactant>
    <organismsDiffer>false</organismsDiffer>
    <experiments>6</experiments>
</comment>
<comment type="interaction">
    <interactant intactId="EBI-358489">
        <id>Q96GM5</id>
    </interactant>
    <interactant intactId="EBI-2340269">
        <id>Q13064</id>
        <label>MKRN3</label>
    </interactant>
    <organismsDiffer>false</organismsDiffer>
    <experiments>3</experiments>
</comment>
<comment type="interaction">
    <interactant intactId="EBI-358489">
        <id>Q96GM5</id>
    </interactant>
    <interactant intactId="EBI-11522433">
        <id>Q5JR59-3</id>
        <label>MTUS2</label>
    </interactant>
    <organismsDiffer>false</organismsDiffer>
    <experiments>3</experiments>
</comment>
<comment type="interaction">
    <interactant intactId="EBI-358489">
        <id>Q96GM5</id>
    </interactant>
    <interactant intactId="EBI-8641936">
        <id>Q15742</id>
        <label>NAB2</label>
    </interactant>
    <organismsDiffer>false</organismsDiffer>
    <experiments>3</experiments>
</comment>
<comment type="interaction">
    <interactant intactId="EBI-358489">
        <id>Q96GM5</id>
    </interactant>
    <interactant intactId="EBI-713665">
        <id>P19404</id>
        <label>NDUFV2</label>
    </interactant>
    <organismsDiffer>false</organismsDiffer>
    <experiments>3</experiments>
</comment>
<comment type="interaction">
    <interactant intactId="EBI-358489">
        <id>Q96GM5</id>
    </interactant>
    <interactant intactId="EBI-10172876">
        <id>Q7Z6G3-2</id>
        <label>NECAB2</label>
    </interactant>
    <organismsDiffer>false</organismsDiffer>
    <experiments>3</experiments>
</comment>
<comment type="interaction">
    <interactant intactId="EBI-358489">
        <id>Q96GM5</id>
    </interactant>
    <interactant intactId="EBI-5461341">
        <id>Q9H3P2</id>
        <label>NELFA</label>
    </interactant>
    <organismsDiffer>false</organismsDiffer>
    <experiments>3</experiments>
</comment>
<comment type="interaction">
    <interactant intactId="EBI-358489">
        <id>Q96GM5</id>
    </interactant>
    <interactant intactId="EBI-2949792">
        <id>Q9BRJ7</id>
        <label>NUDT16L1</label>
    </interactant>
    <organismsDiffer>false</organismsDiffer>
    <experiments>3</experiments>
</comment>
<comment type="interaction">
    <interactant intactId="EBI-358489">
        <id>Q96GM5</id>
    </interactant>
    <interactant intactId="EBI-2811583">
        <id>Q9BVL2</id>
        <label>NUP58</label>
    </interactant>
    <organismsDiffer>false</organismsDiffer>
    <experiments>3</experiments>
</comment>
<comment type="interaction">
    <interactant intactId="EBI-358489">
        <id>Q96GM5</id>
    </interactant>
    <interactant intactId="EBI-748974">
        <id>Q96CV9</id>
        <label>OPTN</label>
    </interactant>
    <organismsDiffer>false</organismsDiffer>
    <experiments>3</experiments>
</comment>
<comment type="interaction">
    <interactant intactId="EBI-358489">
        <id>Q96GM5</id>
    </interactant>
    <interactant intactId="EBI-77926">
        <id>Q9UKS6</id>
        <label>PACSIN3</label>
    </interactant>
    <organismsDiffer>false</organismsDiffer>
    <experiments>3</experiments>
</comment>
<comment type="interaction">
    <interactant intactId="EBI-358489">
        <id>Q96GM5</id>
    </interactant>
    <interactant intactId="EBI-10302990">
        <id>Q9BYU1</id>
        <label>PBX4</label>
    </interactant>
    <organismsDiffer>false</organismsDiffer>
    <experiments>3</experiments>
</comment>
<comment type="interaction">
    <interactant intactId="EBI-358489">
        <id>Q96GM5</id>
    </interactant>
    <interactant intactId="EBI-473160">
        <id>Q8N2W9</id>
        <label>PIAS4</label>
    </interactant>
    <organismsDiffer>false</organismsDiffer>
    <experiments>3</experiments>
</comment>
<comment type="interaction">
    <interactant intactId="EBI-358489">
        <id>Q96GM5</id>
    </interactant>
    <interactant intactId="EBI-79165">
        <id>Q9NRD5</id>
        <label>PICK1</label>
    </interactant>
    <organismsDiffer>false</organismsDiffer>
    <experiments>3</experiments>
</comment>
<comment type="interaction">
    <interactant intactId="EBI-358489">
        <id>Q96GM5</id>
    </interactant>
    <interactant intactId="EBI-357318">
        <id>Q9NWS0</id>
        <label>PIH1D1</label>
    </interactant>
    <organismsDiffer>false</organismsDiffer>
    <experiments>3</experiments>
</comment>
<comment type="interaction">
    <interactant intactId="EBI-358489">
        <id>Q96GM5</id>
    </interactant>
    <interactant intactId="EBI-2692890">
        <id>Q96KN3</id>
        <label>PKNOX2</label>
    </interactant>
    <organismsDiffer>false</organismsDiffer>
    <experiments>3</experiments>
</comment>
<comment type="interaction">
    <interactant intactId="EBI-358489">
        <id>Q96GM5</id>
    </interactant>
    <interactant intactId="EBI-2876622">
        <id>Q9UPG8</id>
        <label>PLAGL2</label>
    </interactant>
    <organismsDiffer>false</organismsDiffer>
    <experiments>3</experiments>
</comment>
<comment type="interaction">
    <interactant intactId="EBI-358489">
        <id>Q96GM5</id>
    </interactant>
    <interactant intactId="EBI-13292717">
        <id>Q5JR12</id>
        <label>PPM1J</label>
    </interactant>
    <organismsDiffer>false</organismsDiffer>
    <experiments>3</experiments>
</comment>
<comment type="interaction">
    <interactant intactId="EBI-358489">
        <id>Q96GM5</id>
    </interactant>
    <interactant intactId="EBI-752074">
        <id>P41219</id>
        <label>PRPH</label>
    </interactant>
    <organismsDiffer>false</organismsDiffer>
    <experiments>3</experiments>
</comment>
<comment type="interaction">
    <interactant intactId="EBI-358489">
        <id>Q96GM5</id>
    </interactant>
    <interactant intactId="EBI-1050964">
        <id>O43586</id>
        <label>PSTPIP1</label>
    </interactant>
    <organismsDiffer>false</organismsDiffer>
    <experiments>3</experiments>
</comment>
<comment type="interaction">
    <interactant intactId="EBI-358489">
        <id>Q96GM5</id>
    </interactant>
    <interactant intactId="EBI-18560266">
        <id>Q92753-1</id>
        <label>RORB</label>
    </interactant>
    <organismsDiffer>false</organismsDiffer>
    <experiments>3</experiments>
</comment>
<comment type="interaction">
    <interactant intactId="EBI-358489">
        <id>Q96GM5</id>
    </interactant>
    <interactant intactId="EBI-12823227">
        <id>Q6ZMJ2-2</id>
        <label>SCARA5</label>
    </interactant>
    <organismsDiffer>false</organismsDiffer>
    <experiments>3</experiments>
</comment>
<comment type="interaction">
    <interactant intactId="EBI-358489">
        <id>Q96GM5</id>
    </interactant>
    <interactant intactId="EBI-11962426">
        <id>P0DPB3-4</id>
        <label>SCHIP1</label>
    </interactant>
    <organismsDiffer>false</organismsDiffer>
    <experiments>3</experiments>
</comment>
<comment type="interaction">
    <interactant intactId="EBI-358489">
        <id>Q96GM5</id>
    </interactant>
    <interactant intactId="EBI-748391">
        <id>Q9BWG6</id>
        <label>SCNM1</label>
    </interactant>
    <organismsDiffer>false</organismsDiffer>
    <experiments>3</experiments>
</comment>
<comment type="interaction">
    <interactant intactId="EBI-358489">
        <id>Q96GM5</id>
    </interactant>
    <interactant intactId="EBI-748621">
        <id>Q9UJW9</id>
        <label>SERTAD3</label>
    </interactant>
    <organismsDiffer>false</organismsDiffer>
    <experiments>3</experiments>
</comment>
<comment type="interaction">
    <interactant intactId="EBI-358489">
        <id>Q96GM5</id>
    </interactant>
    <interactant intactId="EBI-12037847">
        <id>Q6ZSJ9</id>
        <label>SHISA6</label>
    </interactant>
    <organismsDiffer>false</organismsDiffer>
    <experiments>3</experiments>
</comment>
<comment type="interaction">
    <interactant intactId="EBI-358489">
        <id>Q96GM5</id>
    </interactant>
    <interactant intactId="EBI-302489">
        <id>P51532</id>
        <label>SMARCA4</label>
    </interactant>
    <organismsDiffer>false</organismsDiffer>
    <experiments>14</experiments>
</comment>
<comment type="interaction">
    <interactant intactId="EBI-358489">
        <id>Q96GM5</id>
    </interactant>
    <interactant intactId="EBI-358436">
        <id>Q12824-2</id>
        <label>SMARCB1</label>
    </interactant>
    <organismsDiffer>false</organismsDiffer>
    <experiments>3</experiments>
</comment>
<comment type="interaction">
    <interactant intactId="EBI-358489">
        <id>Q96GM5</id>
    </interactant>
    <interactant intactId="EBI-355653">
        <id>Q92922</id>
        <label>SMARCC1</label>
    </interactant>
    <organismsDiffer>false</organismsDiffer>
    <experiments>13</experiments>
</comment>
<comment type="interaction">
    <interactant intactId="EBI-358489">
        <id>Q96GM5</id>
    </interactant>
    <interactant intactId="EBI-357418">
        <id>Q8TAQ2</id>
        <label>SMARCC2</label>
    </interactant>
    <organismsDiffer>false</organismsDiffer>
    <experiments>9</experiments>
</comment>
<comment type="interaction">
    <interactant intactId="EBI-358489">
        <id>Q96GM5</id>
    </interactant>
    <interactant intactId="EBI-12275818">
        <id>Q53HV7-2</id>
        <label>SMUG1</label>
    </interactant>
    <organismsDiffer>false</organismsDiffer>
    <experiments>3</experiments>
</comment>
<comment type="interaction">
    <interactant intactId="EBI-358489">
        <id>Q96GM5</id>
    </interactant>
    <interactant intactId="EBI-747719">
        <id>Q96H20</id>
        <label>SNF8</label>
    </interactant>
    <organismsDiffer>false</organismsDiffer>
    <experiments>3</experiments>
</comment>
<comment type="interaction">
    <interactant intactId="EBI-358489">
        <id>Q96GM5</id>
    </interactant>
    <interactant intactId="EBI-2323209">
        <id>Q99619</id>
        <label>SPSB2</label>
    </interactant>
    <organismsDiffer>false</organismsDiffer>
    <experiments>3</experiments>
</comment>
<comment type="interaction">
    <interactant intactId="EBI-358489">
        <id>Q96GM5</id>
    </interactant>
    <interactant intactId="EBI-12843506">
        <id>Q8IWL8</id>
        <label>STH</label>
    </interactant>
    <organismsDiffer>false</organismsDiffer>
    <experiments>3</experiments>
</comment>
<comment type="interaction">
    <interactant intactId="EBI-358489">
        <id>Q96GM5</id>
    </interactant>
    <interactant intactId="EBI-725557">
        <id>Q9NZ72</id>
        <label>STMN3</label>
    </interactant>
    <organismsDiffer>false</organismsDiffer>
    <experiments>3</experiments>
</comment>
<comment type="interaction">
    <interactant intactId="EBI-358489">
        <id>Q96GM5</id>
    </interactant>
    <interactant intactId="EBI-372899">
        <id>Q13148</id>
        <label>TARDBP</label>
    </interactant>
    <organismsDiffer>false</organismsDiffer>
    <experiments>6</experiments>
</comment>
<comment type="interaction">
    <interactant intactId="EBI-358489">
        <id>Q96GM5</id>
    </interactant>
    <interactant intactId="EBI-3923210">
        <id>Q8TDR4</id>
        <label>TCP10L</label>
    </interactant>
    <organismsDiffer>false</organismsDiffer>
    <experiments>3</experiments>
</comment>
<comment type="interaction">
    <interactant intactId="EBI-358489">
        <id>Q96GM5</id>
    </interactant>
    <interactant intactId="EBI-716286">
        <id>Q6I9Y2</id>
        <label>THOC7</label>
    </interactant>
    <organismsDiffer>false</organismsDiffer>
    <experiments>3</experiments>
</comment>
<comment type="interaction">
    <interactant intactId="EBI-358489">
        <id>Q96GM5</id>
    </interactant>
    <interactant intactId="EBI-11741437">
        <id>Q08117-2</id>
        <label>TLE5</label>
    </interactant>
    <organismsDiffer>false</organismsDiffer>
    <experiments>3</experiments>
</comment>
<comment type="interaction">
    <interactant intactId="EBI-358489">
        <id>Q96GM5</id>
    </interactant>
    <interactant intactId="EBI-719493">
        <id>P14373</id>
        <label>TRIM27</label>
    </interactant>
    <organismsDiffer>false</organismsDiffer>
    <experiments>3</experiments>
</comment>
<comment type="interaction">
    <interactant intactId="EBI-358489">
        <id>Q96GM5</id>
    </interactant>
    <interactant intactId="EBI-2130429">
        <id>Q9BYV2</id>
        <label>TRIM54</label>
    </interactant>
    <organismsDiffer>false</organismsDiffer>
    <experiments>3</experiments>
</comment>
<comment type="interaction">
    <interactant intactId="EBI-358489">
        <id>Q96GM5</id>
    </interactant>
    <interactant intactId="EBI-2341648">
        <id>Q6ZMU5</id>
        <label>TRIM72</label>
    </interactant>
    <organismsDiffer>false</organismsDiffer>
    <experiments>3</experiments>
</comment>
<comment type="interaction">
    <interactant intactId="EBI-358489">
        <id>Q96GM5</id>
    </interactant>
    <interactant intactId="EBI-739895">
        <id>Q8N6Y0</id>
        <label>USHBP1</label>
    </interactant>
    <organismsDiffer>false</organismsDiffer>
    <experiments>4</experiments>
</comment>
<comment type="interaction">
    <interactant intactId="EBI-358489">
        <id>Q96GM5</id>
    </interactant>
    <interactant intactId="EBI-11975223">
        <id>Q70EL1-9</id>
        <label>USP54</label>
    </interactant>
    <organismsDiffer>false</organismsDiffer>
    <experiments>3</experiments>
</comment>
<comment type="interaction">
    <interactant intactId="EBI-358489">
        <id>Q96GM5</id>
    </interactant>
    <interactant intactId="EBI-4400866">
        <id>Q9H9H4</id>
        <label>VPS37B</label>
    </interactant>
    <organismsDiffer>false</organismsDiffer>
    <experiments>7</experiments>
</comment>
<comment type="interaction">
    <interactant intactId="EBI-358489">
        <id>Q96GM5</id>
    </interactant>
    <interactant intactId="EBI-743923">
        <id>O00308</id>
        <label>WWP2</label>
    </interactant>
    <organismsDiffer>false</organismsDiffer>
    <experiments>5</experiments>
</comment>
<comment type="interaction">
    <interactant intactId="EBI-358489">
        <id>Q96GM5</id>
    </interactant>
    <interactant intactId="EBI-716093">
        <id>P13994</id>
        <label>YJU2B</label>
    </interactant>
    <organismsDiffer>false</organismsDiffer>
    <experiments>3</experiments>
</comment>
<comment type="interaction">
    <interactant intactId="EBI-358489">
        <id>Q96GM5</id>
    </interactant>
    <interactant intactId="EBI-14104088">
        <id>Q53FD0-2</id>
        <label>ZC2HC1C</label>
    </interactant>
    <organismsDiffer>false</organismsDiffer>
    <experiments>3</experiments>
</comment>
<comment type="interaction">
    <interactant intactId="EBI-358489">
        <id>Q96GM5</id>
    </interactant>
    <interactant intactId="EBI-7850213">
        <id>Q9UDW3</id>
        <label>ZMAT5</label>
    </interactant>
    <organismsDiffer>false</organismsDiffer>
    <experiments>3</experiments>
</comment>
<comment type="interaction">
    <interactant intactId="EBI-358489">
        <id>Q96GM5</id>
    </interactant>
    <interactant intactId="EBI-12030590">
        <id>Q9H0C1</id>
        <label>ZMYND12</label>
    </interactant>
    <organismsDiffer>false</organismsDiffer>
    <experiments>3</experiments>
</comment>
<comment type="interaction">
    <interactant intactId="EBI-358489">
        <id>Q96GM5</id>
    </interactant>
    <interactant intactId="EBI-740727">
        <id>Q8TAU3</id>
        <label>ZNF417</label>
    </interactant>
    <organismsDiffer>false</organismsDiffer>
    <experiments>3</experiments>
</comment>
<comment type="interaction">
    <interactant intactId="EBI-358489">
        <id>Q96GM5</id>
    </interactant>
    <interactant intactId="EBI-11962468">
        <id>Q7Z4V0</id>
        <label>ZNF438</label>
    </interactant>
    <organismsDiffer>false</organismsDiffer>
    <experiments>3</experiments>
</comment>
<comment type="interaction">
    <interactant intactId="EBI-358489">
        <id>Q96GM5</id>
    </interactant>
    <interactant intactId="EBI-10269136">
        <id>Q8NB15</id>
        <label>ZNF511</label>
    </interactant>
    <organismsDiffer>false</organismsDiffer>
    <experiments>3</experiments>
</comment>
<comment type="interaction">
    <interactant intactId="EBI-358489">
        <id>Q96GM5</id>
    </interactant>
    <interactant intactId="EBI-9977294">
        <id>Q9UEG4</id>
        <label>ZNF629</label>
    </interactant>
    <organismsDiffer>false</organismsDiffer>
    <experiments>3</experiments>
</comment>
<comment type="interaction">
    <interactant intactId="EBI-358489">
        <id>Q96GM5</id>
    </interactant>
    <interactant intactId="EBI-625509">
        <id>Q8N720</id>
        <label>ZNF655</label>
    </interactant>
    <organismsDiffer>false</organismsDiffer>
    <experiments>3</experiments>
</comment>
<comment type="interaction">
    <interactant intactId="EBI-358489">
        <id>Q96GM5</id>
    </interactant>
    <interactant intactId="EBI-12310821">
        <id>Q9UC07-2</id>
        <label>ZNF69</label>
    </interactant>
    <organismsDiffer>false</organismsDiffer>
    <experiments>3</experiments>
</comment>
<comment type="interaction">
    <interactant intactId="EBI-358489">
        <id>Q96GM5</id>
    </interactant>
    <interactant intactId="EBI-17234977">
        <id>A0A1U9X8X8</id>
    </interactant>
    <organismsDiffer>false</organismsDiffer>
    <experiments>3</experiments>
</comment>
<comment type="interaction">
    <interactant intactId="EBI-358489">
        <id>Q96GM5</id>
    </interactant>
    <interactant intactId="EBI-1187143">
        <id>P06536</id>
        <label>Nr3c1</label>
    </interactant>
    <organismsDiffer>true</organismsDiffer>
    <experiments>2</experiments>
</comment>
<comment type="subcellular location">
    <subcellularLocation>
        <location evidence="13 18">Nucleus</location>
    </subcellularLocation>
</comment>
<comment type="alternative products">
    <event type="alternative splicing"/>
    <isoform>
        <id>Q96GM5-1</id>
        <name evidence="13">1</name>
        <sequence type="displayed"/>
    </isoform>
    <isoform>
        <id>Q96GM5-2</id>
        <name evidence="13">2</name>
        <sequence type="described" ref="VSP_004179"/>
    </isoform>
</comment>
<comment type="tissue specificity">
    <text evidence="13">Expressed in all tissues tested, including brain, heart, kidney, liver, lung, muscle, pancreas and placenta.</text>
</comment>
<comment type="disease" evidence="11">
    <disease id="DI-05763">
        <name>Coffin-Siris syndrome 11</name>
        <acronym>CSS11</acronym>
        <description>A form of Coffin-Siris syndrome, a congenital multiple malformation syndrome with broad phenotypic and genetic variability. Cardinal features are intellectual disability, coarse facial features, hypertrichosis, and hypoplastic or absent fifth digit nails or phalanges. Additional features include malformations of the cardiac, gastrointestinal, genitourinary, and/or central nervous systems. Sucking/feeding difficulties, poor growth, ophthalmologic abnormalities, hearing impairment, and spinal anomalies are common findings. CSS11 is an autosomal dominant form characterized by developmental delay, intellectual disability, hypotonia, feeding difficulties, and small hands and feet.</description>
        <dbReference type="MIM" id="618779"/>
    </disease>
    <text>The disease is caused by variants affecting the gene represented in this entry.</text>
</comment>
<comment type="similarity">
    <text evidence="3">Belongs to the SMARCD family.</text>
</comment>
<comment type="sequence caution" evidence="18">
    <conflict type="frameshift">
        <sequence resource="EMBL-CDS" id="AAC50695"/>
    </conflict>
</comment>
<comment type="sequence caution" evidence="18">
    <conflict type="erroneous initiation">
        <sequence resource="EMBL-CDS" id="AAD23390"/>
    </conflict>
    <text>Truncated N-terminus.</text>
</comment>
<comment type="sequence caution" evidence="18">
    <conflict type="erroneous initiation">
        <sequence resource="EMBL-CDS" id="AAH09368"/>
    </conflict>
    <text>Truncated N-terminus.</text>
</comment>